<dbReference type="EC" id="2.3.2.31" evidence="9 10 11 28"/>
<dbReference type="EMBL" id="AY256461">
    <property type="protein sequence ID" value="AAP12522.1"/>
    <property type="molecule type" value="mRNA"/>
</dbReference>
<dbReference type="EMBL" id="AB265810">
    <property type="protein sequence ID" value="BAF35583.1"/>
    <property type="molecule type" value="mRNA"/>
</dbReference>
<dbReference type="EMBL" id="AK000973">
    <property type="protein sequence ID" value="BAA91450.1"/>
    <property type="molecule type" value="mRNA"/>
</dbReference>
<dbReference type="EMBL" id="AK027154">
    <property type="protein sequence ID" value="BAB15675.1"/>
    <property type="status" value="ALT_FRAME"/>
    <property type="molecule type" value="mRNA"/>
</dbReference>
<dbReference type="EMBL" id="AK055542">
    <property type="protein sequence ID" value="BAB70948.1"/>
    <property type="status" value="ALT_INIT"/>
    <property type="molecule type" value="mRNA"/>
</dbReference>
<dbReference type="EMBL" id="AK291247">
    <property type="protein sequence ID" value="BAF83936.1"/>
    <property type="molecule type" value="mRNA"/>
</dbReference>
<dbReference type="EMBL" id="AL136295">
    <property type="status" value="NOT_ANNOTATED_CDS"/>
    <property type="molecule type" value="Genomic_DNA"/>
</dbReference>
<dbReference type="EMBL" id="CH471078">
    <property type="protein sequence ID" value="EAW66098.1"/>
    <property type="molecule type" value="Genomic_DNA"/>
</dbReference>
<dbReference type="EMBL" id="BC009821">
    <property type="protein sequence ID" value="AAH09821.3"/>
    <property type="molecule type" value="mRNA"/>
</dbReference>
<dbReference type="EMBL" id="BC012077">
    <property type="protein sequence ID" value="AAH12077.1"/>
    <property type="molecule type" value="mRNA"/>
</dbReference>
<dbReference type="EMBL" id="BC017376">
    <property type="protein sequence ID" value="AAH17376.3"/>
    <property type="molecule type" value="mRNA"/>
</dbReference>
<dbReference type="EMBL" id="AK074144">
    <property type="protein sequence ID" value="BAB84970.1"/>
    <property type="molecule type" value="mRNA"/>
</dbReference>
<dbReference type="CCDS" id="CCDS41931.1">
    <molecule id="Q96EP0-1"/>
</dbReference>
<dbReference type="CCDS" id="CCDS81792.1">
    <molecule id="Q96EP0-3"/>
</dbReference>
<dbReference type="RefSeq" id="NP_001297261.1">
    <molecule id="Q96EP0-3"/>
    <property type="nucleotide sequence ID" value="NM_001310332.2"/>
</dbReference>
<dbReference type="RefSeq" id="NP_060469.4">
    <molecule id="Q96EP0-1"/>
    <property type="nucleotide sequence ID" value="NM_017999.4"/>
</dbReference>
<dbReference type="PDB" id="2CT7">
    <property type="method" value="NMR"/>
    <property type="chains" value="A=779-851"/>
</dbReference>
<dbReference type="PDB" id="4DBG">
    <property type="method" value="X-ray"/>
    <property type="resolution" value="2.71 A"/>
    <property type="chains" value="B=480-636"/>
</dbReference>
<dbReference type="PDB" id="4JUY">
    <property type="method" value="X-ray"/>
    <property type="resolution" value="2.40 A"/>
    <property type="chains" value="A/B=1-180"/>
</dbReference>
<dbReference type="PDB" id="4LJO">
    <property type="method" value="X-ray"/>
    <property type="resolution" value="1.56 A"/>
    <property type="chains" value="A=853-1072"/>
</dbReference>
<dbReference type="PDB" id="4LJP">
    <property type="method" value="X-ray"/>
    <property type="resolution" value="2.15 A"/>
    <property type="chains" value="A=853-1072"/>
</dbReference>
<dbReference type="PDB" id="4LJQ">
    <property type="method" value="X-ray"/>
    <property type="resolution" value="2.45 A"/>
    <property type="chains" value="A/B/C/D=853-1072"/>
</dbReference>
<dbReference type="PDB" id="4OWF">
    <property type="method" value="X-ray"/>
    <property type="resolution" value="2.00 A"/>
    <property type="chains" value="G=350-379"/>
</dbReference>
<dbReference type="PDB" id="4OYJ">
    <property type="method" value="X-ray"/>
    <property type="resolution" value="3.00 A"/>
    <property type="chains" value="A/B/C/D/E/F/G/H/I/J/K/L/M=1-184"/>
</dbReference>
<dbReference type="PDB" id="4OYK">
    <property type="method" value="X-ray"/>
    <property type="resolution" value="2.00 A"/>
    <property type="chains" value="A/B=3-179"/>
</dbReference>
<dbReference type="PDB" id="4P09">
    <property type="method" value="X-ray"/>
    <property type="resolution" value="1.70 A"/>
    <property type="chains" value="A=1-179"/>
</dbReference>
<dbReference type="PDB" id="4P0A">
    <property type="method" value="X-ray"/>
    <property type="resolution" value="2.30 A"/>
    <property type="chains" value="A/C=1-179"/>
</dbReference>
<dbReference type="PDB" id="4P0B">
    <property type="method" value="X-ray"/>
    <property type="resolution" value="2.70 A"/>
    <property type="chains" value="A/C=1-179"/>
</dbReference>
<dbReference type="PDB" id="5EDV">
    <property type="method" value="X-ray"/>
    <property type="resolution" value="3.48 A"/>
    <property type="chains" value="A/B=696-1072"/>
</dbReference>
<dbReference type="PDB" id="5LJN">
    <property type="method" value="X-ray"/>
    <property type="resolution" value="2.70 A"/>
    <property type="chains" value="A/B=5-176"/>
</dbReference>
<dbReference type="PDB" id="5X0W">
    <property type="method" value="X-ray"/>
    <property type="resolution" value="3.00 A"/>
    <property type="chains" value="A/C/E/G=480-639"/>
</dbReference>
<dbReference type="PDB" id="6GZY">
    <property type="method" value="X-ray"/>
    <property type="resolution" value="2.15 A"/>
    <property type="chains" value="A/B=853-1072"/>
</dbReference>
<dbReference type="PDB" id="6KC5">
    <property type="method" value="X-ray"/>
    <property type="resolution" value="1.54 A"/>
    <property type="chains" value="B=853-1072"/>
</dbReference>
<dbReference type="PDB" id="6KC6">
    <property type="method" value="X-ray"/>
    <property type="resolution" value="2.12 A"/>
    <property type="chains" value="A/C/E/G/I/K=853-1072"/>
</dbReference>
<dbReference type="PDB" id="6SC5">
    <property type="method" value="X-ray"/>
    <property type="resolution" value="2.10 A"/>
    <property type="chains" value="A=697-1072"/>
</dbReference>
<dbReference type="PDB" id="6SC6">
    <property type="method" value="X-ray"/>
    <property type="resolution" value="2.25 A"/>
    <property type="chains" value="A=697-1072"/>
</dbReference>
<dbReference type="PDB" id="6SC7">
    <property type="method" value="X-ray"/>
    <property type="resolution" value="2.56 A"/>
    <property type="chains" value="A=697-1072"/>
</dbReference>
<dbReference type="PDB" id="6SC8">
    <property type="method" value="X-ray"/>
    <property type="resolution" value="2.11 A"/>
    <property type="chains" value="A=697-1072"/>
</dbReference>
<dbReference type="PDB" id="6SC9">
    <property type="method" value="X-ray"/>
    <property type="resolution" value="2.47 A"/>
    <property type="chains" value="A=697-1072"/>
</dbReference>
<dbReference type="PDB" id="7TV4">
    <property type="method" value="X-ray"/>
    <property type="resolution" value="4.20 A"/>
    <property type="chains" value="K=350-379"/>
</dbReference>
<dbReference type="PDB" id="7UY2">
    <property type="method" value="X-ray"/>
    <property type="resolution" value="2.51 A"/>
    <property type="chains" value="A/B=1-179"/>
</dbReference>
<dbReference type="PDB" id="7UYJ">
    <property type="method" value="X-ray"/>
    <property type="resolution" value="2.32 A"/>
    <property type="chains" value="A/B=1-179"/>
</dbReference>
<dbReference type="PDB" id="7UYK">
    <property type="method" value="X-ray"/>
    <property type="resolution" value="2.70 A"/>
    <property type="chains" value="A/B=480-639"/>
</dbReference>
<dbReference type="PDB" id="7V8F">
    <property type="method" value="X-ray"/>
    <property type="resolution" value="1.66 A"/>
    <property type="chains" value="B=697-793"/>
</dbReference>
<dbReference type="PDB" id="7V8G">
    <property type="method" value="X-ray"/>
    <property type="resolution" value="2.75 A"/>
    <property type="chains" value="C/D=697-793"/>
</dbReference>
<dbReference type="PDB" id="8Z30">
    <property type="method" value="X-ray"/>
    <property type="resolution" value="2.30 A"/>
    <property type="chains" value="A/B/C=4-179"/>
</dbReference>
<dbReference type="PDB" id="8Z36">
    <property type="method" value="X-ray"/>
    <property type="resolution" value="2.63 A"/>
    <property type="chains" value="A/B/C=4-179"/>
</dbReference>
<dbReference type="PDB" id="9AZJ">
    <property type="method" value="X-ray"/>
    <property type="resolution" value="3.32 A"/>
    <property type="chains" value="E/G=351-379"/>
</dbReference>
<dbReference type="PDB" id="9B0B">
    <property type="method" value="X-ray"/>
    <property type="resolution" value="1.70 A"/>
    <property type="chains" value="E/G=350-379"/>
</dbReference>
<dbReference type="PDB" id="9B0Z">
    <property type="method" value="X-ray"/>
    <property type="resolution" value="2.41 A"/>
    <property type="chains" value="E/F=350-379"/>
</dbReference>
<dbReference type="PDB" id="9B12">
    <property type="method" value="X-ray"/>
    <property type="resolution" value="1.81 A"/>
    <property type="chains" value="G/H/I/J=350-379"/>
</dbReference>
<dbReference type="PDBsum" id="2CT7"/>
<dbReference type="PDBsum" id="4DBG"/>
<dbReference type="PDBsum" id="4JUY"/>
<dbReference type="PDBsum" id="4LJO"/>
<dbReference type="PDBsum" id="4LJP"/>
<dbReference type="PDBsum" id="4LJQ"/>
<dbReference type="PDBsum" id="4OWF"/>
<dbReference type="PDBsum" id="4OYJ"/>
<dbReference type="PDBsum" id="4OYK"/>
<dbReference type="PDBsum" id="4P09"/>
<dbReference type="PDBsum" id="4P0A"/>
<dbReference type="PDBsum" id="4P0B"/>
<dbReference type="PDBsum" id="5EDV"/>
<dbReference type="PDBsum" id="5LJN"/>
<dbReference type="PDBsum" id="5X0W"/>
<dbReference type="PDBsum" id="6GZY"/>
<dbReference type="PDBsum" id="6KC5"/>
<dbReference type="PDBsum" id="6KC6"/>
<dbReference type="PDBsum" id="6SC5"/>
<dbReference type="PDBsum" id="6SC6"/>
<dbReference type="PDBsum" id="6SC7"/>
<dbReference type="PDBsum" id="6SC8"/>
<dbReference type="PDBsum" id="6SC9"/>
<dbReference type="PDBsum" id="7TV4"/>
<dbReference type="PDBsum" id="7UY2"/>
<dbReference type="PDBsum" id="7UYJ"/>
<dbReference type="PDBsum" id="7UYK"/>
<dbReference type="PDBsum" id="7V8F"/>
<dbReference type="PDBsum" id="7V8G"/>
<dbReference type="PDBsum" id="8Z30"/>
<dbReference type="PDBsum" id="8Z36"/>
<dbReference type="PDBsum" id="9AZJ"/>
<dbReference type="PDBsum" id="9B0B"/>
<dbReference type="PDBsum" id="9B0Z"/>
<dbReference type="PDBsum" id="9B12"/>
<dbReference type="BMRB" id="Q96EP0"/>
<dbReference type="EMDB" id="EMD-11054"/>
<dbReference type="SMR" id="Q96EP0"/>
<dbReference type="BioGRID" id="120389">
    <property type="interactions" value="437"/>
</dbReference>
<dbReference type="ComplexPortal" id="CPX-1877">
    <property type="entry name" value="LUBAC ubiquitin ligase complex"/>
</dbReference>
<dbReference type="CORUM" id="Q96EP0"/>
<dbReference type="DIP" id="DIP-44034N"/>
<dbReference type="FunCoup" id="Q96EP0">
    <property type="interactions" value="982"/>
</dbReference>
<dbReference type="IntAct" id="Q96EP0">
    <property type="interactions" value="108"/>
</dbReference>
<dbReference type="MINT" id="Q96EP0"/>
<dbReference type="STRING" id="9606.ENSP00000315112"/>
<dbReference type="BindingDB" id="Q96EP0"/>
<dbReference type="ChEMBL" id="CHEMBL5465546"/>
<dbReference type="GlyGen" id="Q96EP0">
    <property type="glycosylation" value="2 sites"/>
</dbReference>
<dbReference type="iPTMnet" id="Q96EP0"/>
<dbReference type="MetOSite" id="Q96EP0"/>
<dbReference type="PhosphoSitePlus" id="Q96EP0"/>
<dbReference type="BioMuta" id="RNF31"/>
<dbReference type="DMDM" id="45477216"/>
<dbReference type="jPOST" id="Q96EP0"/>
<dbReference type="MassIVE" id="Q96EP0"/>
<dbReference type="PaxDb" id="9606-ENSP00000315112"/>
<dbReference type="PeptideAtlas" id="Q96EP0"/>
<dbReference type="ProteomicsDB" id="76429">
    <molecule id="Q96EP0-1"/>
</dbReference>
<dbReference type="ProteomicsDB" id="76430">
    <molecule id="Q96EP0-2"/>
</dbReference>
<dbReference type="ProteomicsDB" id="76431">
    <molecule id="Q96EP0-3"/>
</dbReference>
<dbReference type="Pumba" id="Q96EP0"/>
<dbReference type="ABCD" id="Q96EP0">
    <property type="antibodies" value="10 sequenced antibodies"/>
</dbReference>
<dbReference type="Antibodypedia" id="22671">
    <property type="antibodies" value="253 antibodies from 35 providers"/>
</dbReference>
<dbReference type="DNASU" id="55072"/>
<dbReference type="Ensembl" id="ENST00000324103.11">
    <molecule id="Q96EP0-1"/>
    <property type="protein sequence ID" value="ENSP00000315112.6"/>
    <property type="gene ID" value="ENSG00000092098.18"/>
</dbReference>
<dbReference type="Ensembl" id="ENST00000559275.5">
    <molecule id="Q96EP0-3"/>
    <property type="protein sequence ID" value="ENSP00000453574.1"/>
    <property type="gene ID" value="ENSG00000092098.18"/>
</dbReference>
<dbReference type="Ensembl" id="ENST00000642631.1">
    <molecule id="Q96EP0-3"/>
    <property type="protein sequence ID" value="ENSP00000494011.1"/>
    <property type="gene ID" value="ENSG00000285152.2"/>
</dbReference>
<dbReference type="Ensembl" id="ENST00000647495.2">
    <molecule id="Q96EP0-1"/>
    <property type="protein sequence ID" value="ENSP00000496609.1"/>
    <property type="gene ID" value="ENSG00000285152.2"/>
</dbReference>
<dbReference type="GeneID" id="55072"/>
<dbReference type="KEGG" id="hsa:55072"/>
<dbReference type="MANE-Select" id="ENST00000324103.11">
    <property type="protein sequence ID" value="ENSP00000315112.6"/>
    <property type="RefSeq nucleotide sequence ID" value="NM_017999.5"/>
    <property type="RefSeq protein sequence ID" value="NP_060469.4"/>
</dbReference>
<dbReference type="UCSC" id="uc001wml.2">
    <molecule id="Q96EP0-1"/>
    <property type="organism name" value="human"/>
</dbReference>
<dbReference type="AGR" id="HGNC:16031"/>
<dbReference type="CTD" id="55072"/>
<dbReference type="DisGeNET" id="55072"/>
<dbReference type="GeneCards" id="RNF31"/>
<dbReference type="HGNC" id="HGNC:16031">
    <property type="gene designation" value="RNF31"/>
</dbReference>
<dbReference type="HPA" id="ENSG00000092098">
    <property type="expression patterns" value="Low tissue specificity"/>
</dbReference>
<dbReference type="MalaCards" id="RNF31"/>
<dbReference type="MIM" id="612487">
    <property type="type" value="gene"/>
</dbReference>
<dbReference type="MIM" id="620632">
    <property type="type" value="phenotype"/>
</dbReference>
<dbReference type="neXtProt" id="NX_Q96EP0"/>
<dbReference type="OpenTargets" id="ENSG00000092098"/>
<dbReference type="OpenTargets" id="ENSG00000259529"/>
<dbReference type="Orphanet" id="329173">
    <property type="disease" value="Autoinflammatory syndrome with pyogenic bacterial infection and amylopectinosis"/>
</dbReference>
<dbReference type="PharmGKB" id="PA134906471"/>
<dbReference type="VEuPathDB" id="HostDB:ENSG00000092098"/>
<dbReference type="eggNOG" id="KOG1812">
    <property type="taxonomic scope" value="Eukaryota"/>
</dbReference>
<dbReference type="GeneTree" id="ENSGT00530000064112"/>
<dbReference type="InParanoid" id="Q96EP0"/>
<dbReference type="OMA" id="LVIMIRE"/>
<dbReference type="OrthoDB" id="9978677at2759"/>
<dbReference type="PAN-GO" id="Q96EP0">
    <property type="GO annotations" value="5 GO annotations based on evolutionary models"/>
</dbReference>
<dbReference type="PhylomeDB" id="Q96EP0"/>
<dbReference type="TreeFam" id="TF350529"/>
<dbReference type="BRENDA" id="2.3.2.31">
    <property type="organism ID" value="2681"/>
</dbReference>
<dbReference type="PathwayCommons" id="Q96EP0"/>
<dbReference type="Reactome" id="R-HSA-5357786">
    <property type="pathway name" value="TNFR1-induced proapoptotic signaling"/>
</dbReference>
<dbReference type="Reactome" id="R-HSA-5357905">
    <property type="pathway name" value="Regulation of TNFR1 signaling"/>
</dbReference>
<dbReference type="Reactome" id="R-HSA-5357956">
    <property type="pathway name" value="TNFR1-induced NF-kappa-B signaling pathway"/>
</dbReference>
<dbReference type="SignaLink" id="Q96EP0"/>
<dbReference type="SIGNOR" id="Q96EP0"/>
<dbReference type="UniPathway" id="UPA00143"/>
<dbReference type="BioGRID-ORCS" id="55072">
    <property type="hits" value="92 hits in 1199 CRISPR screens"/>
</dbReference>
<dbReference type="ChiTaRS" id="RNF31">
    <property type="organism name" value="human"/>
</dbReference>
<dbReference type="EvolutionaryTrace" id="Q96EP0"/>
<dbReference type="GeneWiki" id="RNF31"/>
<dbReference type="GenomeRNAi" id="55072"/>
<dbReference type="Pharos" id="Q96EP0">
    <property type="development level" value="Tbio"/>
</dbReference>
<dbReference type="PRO" id="PR:Q96EP0"/>
<dbReference type="Proteomes" id="UP000005640">
    <property type="component" value="Chromosome 14"/>
</dbReference>
<dbReference type="RNAct" id="Q96EP0">
    <property type="molecule type" value="protein"/>
</dbReference>
<dbReference type="Bgee" id="ENSG00000092098">
    <property type="expression patterns" value="Expressed in spleen and 99 other cell types or tissues"/>
</dbReference>
<dbReference type="ExpressionAtlas" id="Q96EP0">
    <property type="expression patterns" value="baseline and differential"/>
</dbReference>
<dbReference type="GO" id="GO:0035631">
    <property type="term" value="C:CD40 receptor complex"/>
    <property type="evidence" value="ECO:0000250"/>
    <property type="project" value="BHF-UCL"/>
</dbReference>
<dbReference type="GO" id="GO:0009898">
    <property type="term" value="C:cytoplasmic side of plasma membrane"/>
    <property type="evidence" value="ECO:0000250"/>
    <property type="project" value="BHF-UCL"/>
</dbReference>
<dbReference type="GO" id="GO:0005829">
    <property type="term" value="C:cytosol"/>
    <property type="evidence" value="ECO:0000304"/>
    <property type="project" value="Reactome"/>
</dbReference>
<dbReference type="GO" id="GO:0071797">
    <property type="term" value="C:LUBAC complex"/>
    <property type="evidence" value="ECO:0000314"/>
    <property type="project" value="UniProtKB"/>
</dbReference>
<dbReference type="GO" id="GO:0042802">
    <property type="term" value="F:identical protein binding"/>
    <property type="evidence" value="ECO:0000353"/>
    <property type="project" value="IntAct"/>
</dbReference>
<dbReference type="GO" id="GO:0036435">
    <property type="term" value="F:K48-linked polyubiquitin modification-dependent protein binding"/>
    <property type="evidence" value="ECO:0000318"/>
    <property type="project" value="GO_Central"/>
</dbReference>
<dbReference type="GO" id="GO:0070530">
    <property type="term" value="F:K63-linked polyubiquitin modification-dependent protein binding"/>
    <property type="evidence" value="ECO:0000318"/>
    <property type="project" value="GO_Central"/>
</dbReference>
<dbReference type="GO" id="GO:1990450">
    <property type="term" value="F:linear polyubiquitin binding"/>
    <property type="evidence" value="ECO:0000318"/>
    <property type="project" value="GO_Central"/>
</dbReference>
<dbReference type="GO" id="GO:0043130">
    <property type="term" value="F:ubiquitin binding"/>
    <property type="evidence" value="ECO:0000314"/>
    <property type="project" value="UniProtKB"/>
</dbReference>
<dbReference type="GO" id="GO:0061630">
    <property type="term" value="F:ubiquitin protein ligase activity"/>
    <property type="evidence" value="ECO:0000314"/>
    <property type="project" value="UniProtKB"/>
</dbReference>
<dbReference type="GO" id="GO:0031625">
    <property type="term" value="F:ubiquitin protein ligase binding"/>
    <property type="evidence" value="ECO:0000353"/>
    <property type="project" value="ParkinsonsUK-UCL"/>
</dbReference>
<dbReference type="GO" id="GO:0004842">
    <property type="term" value="F:ubiquitin-protein transferase activity"/>
    <property type="evidence" value="ECO:0000314"/>
    <property type="project" value="UniProtKB"/>
</dbReference>
<dbReference type="GO" id="GO:0008270">
    <property type="term" value="F:zinc ion binding"/>
    <property type="evidence" value="ECO:0007669"/>
    <property type="project" value="UniProtKB-KW"/>
</dbReference>
<dbReference type="GO" id="GO:0023035">
    <property type="term" value="P:CD40 signaling pathway"/>
    <property type="evidence" value="ECO:0000250"/>
    <property type="project" value="BHF-UCL"/>
</dbReference>
<dbReference type="GO" id="GO:0042742">
    <property type="term" value="P:defense response to bacterium"/>
    <property type="evidence" value="ECO:0000314"/>
    <property type="project" value="UniProtKB"/>
</dbReference>
<dbReference type="GO" id="GO:0060546">
    <property type="term" value="P:negative regulation of necroptotic process"/>
    <property type="evidence" value="ECO:0007669"/>
    <property type="project" value="Ensembl"/>
</dbReference>
<dbReference type="GO" id="GO:0043123">
    <property type="term" value="P:positive regulation of canonical NF-kappaB signal transduction"/>
    <property type="evidence" value="ECO:0000314"/>
    <property type="project" value="UniProtKB"/>
</dbReference>
<dbReference type="GO" id="GO:0051092">
    <property type="term" value="P:positive regulation of NF-kappaB transcription factor activity"/>
    <property type="evidence" value="ECO:0000314"/>
    <property type="project" value="UniProtKB"/>
</dbReference>
<dbReference type="GO" id="GO:1903955">
    <property type="term" value="P:positive regulation of protein targeting to mitochondrion"/>
    <property type="evidence" value="ECO:0007001"/>
    <property type="project" value="ParkinsonsUK-UCL"/>
</dbReference>
<dbReference type="GO" id="GO:1904417">
    <property type="term" value="P:positive regulation of xenophagy"/>
    <property type="evidence" value="ECO:0000314"/>
    <property type="project" value="UniProtKB"/>
</dbReference>
<dbReference type="GO" id="GO:0097039">
    <property type="term" value="P:protein linear polyubiquitination"/>
    <property type="evidence" value="ECO:0000314"/>
    <property type="project" value="UniProtKB"/>
</dbReference>
<dbReference type="GO" id="GO:0000209">
    <property type="term" value="P:protein polyubiquitination"/>
    <property type="evidence" value="ECO:0000314"/>
    <property type="project" value="UniProtKB"/>
</dbReference>
<dbReference type="GO" id="GO:0050852">
    <property type="term" value="P:T cell receptor signaling pathway"/>
    <property type="evidence" value="ECO:0000314"/>
    <property type="project" value="UniProtKB"/>
</dbReference>
<dbReference type="CDD" id="cd19815">
    <property type="entry name" value="Bbox1_HOIP"/>
    <property type="match status" value="1"/>
</dbReference>
<dbReference type="CDD" id="cd20337">
    <property type="entry name" value="BRcat_RBR_HOIP"/>
    <property type="match status" value="1"/>
</dbReference>
<dbReference type="CDD" id="cd16631">
    <property type="entry name" value="mRING-HC-C4C4_RBR_HOIP"/>
    <property type="match status" value="1"/>
</dbReference>
<dbReference type="CDD" id="cd10464">
    <property type="entry name" value="PUB_RNF31"/>
    <property type="match status" value="1"/>
</dbReference>
<dbReference type="CDD" id="cd20351">
    <property type="entry name" value="Rcat_RBR_HOIP"/>
    <property type="match status" value="1"/>
</dbReference>
<dbReference type="CDD" id="cd14325">
    <property type="entry name" value="UBA_RNF31"/>
    <property type="match status" value="1"/>
</dbReference>
<dbReference type="FunFam" id="1.10.8.10:FF:000071">
    <property type="entry name" value="E3 ubiquitin-protein ligase RNF31"/>
    <property type="match status" value="1"/>
</dbReference>
<dbReference type="FunFam" id="1.20.58.2190:FF:000004">
    <property type="entry name" value="E3 ubiquitin-protein ligase RNF31"/>
    <property type="match status" value="1"/>
</dbReference>
<dbReference type="FunFam" id="1.20.120.1750:FF:000015">
    <property type="entry name" value="E3 ubiquitin-protein ligase RNF31 isoform X2"/>
    <property type="match status" value="1"/>
</dbReference>
<dbReference type="FunFam" id="3.30.40.10:FF:000220">
    <property type="entry name" value="E3 ubiquitin-protein ligase RNF31 isoform X2"/>
    <property type="match status" value="1"/>
</dbReference>
<dbReference type="Gene3D" id="1.20.120.1750">
    <property type="match status" value="1"/>
</dbReference>
<dbReference type="Gene3D" id="1.20.58.2190">
    <property type="match status" value="1"/>
</dbReference>
<dbReference type="Gene3D" id="6.10.140.1100">
    <property type="match status" value="1"/>
</dbReference>
<dbReference type="Gene3D" id="1.10.8.10">
    <property type="entry name" value="DNA helicase RuvA subunit, C-terminal domain"/>
    <property type="match status" value="1"/>
</dbReference>
<dbReference type="Gene3D" id="4.10.1060.10">
    <property type="entry name" value="Zinc finger, RanBP2-type"/>
    <property type="match status" value="1"/>
</dbReference>
<dbReference type="Gene3D" id="3.30.40.10">
    <property type="entry name" value="Zinc/RING finger domain, C3HC4 (zinc finger)"/>
    <property type="match status" value="1"/>
</dbReference>
<dbReference type="IDEAL" id="IID00576"/>
<dbReference type="InterPro" id="IPR047543">
    <property type="entry name" value="Bbox1_RNF31-like"/>
</dbReference>
<dbReference type="InterPro" id="IPR047540">
    <property type="entry name" value="BRcat_RBR_RNF31-like"/>
</dbReference>
<dbReference type="InterPro" id="IPR002867">
    <property type="entry name" value="IBR_dom"/>
</dbReference>
<dbReference type="InterPro" id="IPR036339">
    <property type="entry name" value="PUB-like_dom_sf"/>
</dbReference>
<dbReference type="InterPro" id="IPR018997">
    <property type="entry name" value="PUB_domain"/>
</dbReference>
<dbReference type="InterPro" id="IPR047542">
    <property type="entry name" value="Rcat_RBR_RNF31-like"/>
</dbReference>
<dbReference type="InterPro" id="IPR026254">
    <property type="entry name" value="RNF31-like"/>
</dbReference>
<dbReference type="InterPro" id="IPR032065">
    <property type="entry name" value="RNF31-UBA"/>
</dbReference>
<dbReference type="InterPro" id="IPR041031">
    <property type="entry name" value="RNF31_C"/>
</dbReference>
<dbReference type="InterPro" id="IPR040641">
    <property type="entry name" value="RNF31_PUB"/>
</dbReference>
<dbReference type="InterPro" id="IPR047541">
    <property type="entry name" value="RNF31_RBR_mRING-HC-like"/>
</dbReference>
<dbReference type="InterPro" id="IPR044066">
    <property type="entry name" value="TRIAD_supradom"/>
</dbReference>
<dbReference type="InterPro" id="IPR015940">
    <property type="entry name" value="UBA"/>
</dbReference>
<dbReference type="InterPro" id="IPR047539">
    <property type="entry name" value="UBA_RNF31"/>
</dbReference>
<dbReference type="InterPro" id="IPR001876">
    <property type="entry name" value="Znf_RanBP2"/>
</dbReference>
<dbReference type="InterPro" id="IPR036443">
    <property type="entry name" value="Znf_RanBP2_sf"/>
</dbReference>
<dbReference type="InterPro" id="IPR013083">
    <property type="entry name" value="Znf_RING/FYVE/PHD"/>
</dbReference>
<dbReference type="InterPro" id="IPR017907">
    <property type="entry name" value="Znf_RING_CS"/>
</dbReference>
<dbReference type="PANTHER" id="PTHR16004:SF5">
    <property type="entry name" value="E3 UBIQUITIN-PROTEIN LIGASE RNF31"/>
    <property type="match status" value="1"/>
</dbReference>
<dbReference type="PANTHER" id="PTHR16004">
    <property type="entry name" value="RING FINGER PROTEIN 31-RELATED"/>
    <property type="match status" value="1"/>
</dbReference>
<dbReference type="Pfam" id="PF18091">
    <property type="entry name" value="E3_UbLigase_RBR"/>
    <property type="match status" value="1"/>
</dbReference>
<dbReference type="Pfam" id="PF22191">
    <property type="entry name" value="IBR_1"/>
    <property type="match status" value="2"/>
</dbReference>
<dbReference type="Pfam" id="PF09409">
    <property type="entry name" value="PUB"/>
    <property type="match status" value="1"/>
</dbReference>
<dbReference type="Pfam" id="PF18486">
    <property type="entry name" value="PUB_1"/>
    <property type="match status" value="1"/>
</dbReference>
<dbReference type="Pfam" id="PF16678">
    <property type="entry name" value="UBA_HOIP"/>
    <property type="match status" value="1"/>
</dbReference>
<dbReference type="Pfam" id="PF25163">
    <property type="entry name" value="UBA_RNF31"/>
    <property type="match status" value="1"/>
</dbReference>
<dbReference type="SMART" id="SM00647">
    <property type="entry name" value="IBR"/>
    <property type="match status" value="2"/>
</dbReference>
<dbReference type="SMART" id="SM00547">
    <property type="entry name" value="ZnF_RBZ"/>
    <property type="match status" value="3"/>
</dbReference>
<dbReference type="SUPFAM" id="SSF143503">
    <property type="entry name" value="PUG domain-like"/>
    <property type="match status" value="1"/>
</dbReference>
<dbReference type="SUPFAM" id="SSF90209">
    <property type="entry name" value="Ran binding protein zinc finger-like"/>
    <property type="match status" value="1"/>
</dbReference>
<dbReference type="SUPFAM" id="SSF57850">
    <property type="entry name" value="RING/U-box"/>
    <property type="match status" value="3"/>
</dbReference>
<dbReference type="PROSITE" id="PS51873">
    <property type="entry name" value="TRIAD"/>
    <property type="match status" value="1"/>
</dbReference>
<dbReference type="PROSITE" id="PS50030">
    <property type="entry name" value="UBA"/>
    <property type="match status" value="1"/>
</dbReference>
<dbReference type="PROSITE" id="PS01358">
    <property type="entry name" value="ZF_RANBP2_1"/>
    <property type="match status" value="3"/>
</dbReference>
<dbReference type="PROSITE" id="PS50199">
    <property type="entry name" value="ZF_RANBP2_2"/>
    <property type="match status" value="2"/>
</dbReference>
<dbReference type="PROSITE" id="PS00518">
    <property type="entry name" value="ZF_RING_1"/>
    <property type="match status" value="1"/>
</dbReference>
<gene>
    <name evidence="36" type="primary">RNF31</name>
    <name evidence="33" type="synonym">ZIBRA</name>
</gene>
<name>RNF31_HUMAN</name>
<organism>
    <name type="scientific">Homo sapiens</name>
    <name type="common">Human</name>
    <dbReference type="NCBI Taxonomy" id="9606"/>
    <lineage>
        <taxon>Eukaryota</taxon>
        <taxon>Metazoa</taxon>
        <taxon>Chordata</taxon>
        <taxon>Craniata</taxon>
        <taxon>Vertebrata</taxon>
        <taxon>Euteleostomi</taxon>
        <taxon>Mammalia</taxon>
        <taxon>Eutheria</taxon>
        <taxon>Euarchontoglires</taxon>
        <taxon>Primates</taxon>
        <taxon>Haplorrhini</taxon>
        <taxon>Catarrhini</taxon>
        <taxon>Hominidae</taxon>
        <taxon>Homo</taxon>
    </lineage>
</organism>
<accession>Q96EP0</accession>
<accession>A0A962</accession>
<accession>Q86VI2</accession>
<accession>Q8TEI0</accession>
<accession>Q96GB4</accession>
<accession>Q96NF1</accession>
<accession>Q9H5F1</accession>
<accession>Q9NWD2</accession>
<comment type="function">
    <text evidence="9 10 11 12 13 14 16 17 22 26 27 28 30">E3 ubiquitin-protein ligase component of the LUBAC complex which conjugates linear ('Met-1'-linked) polyubiquitin chains to substrates and plays a key role in NF-kappa-B activation and regulation of inflammation (PubMed:17006537, PubMed:19136968, PubMed:20005846, PubMed:21455173, PubMed:21455180, PubMed:21455181, PubMed:22863777, PubMed:28189684, PubMed:28481331). LUBAC conjugates linear polyubiquitin to IKBKG and RIPK1 and is involved in activation of the canonical NF-kappa-B and the JNK signaling pathways (PubMed:17006537, PubMed:19136968, PubMed:20005846, PubMed:21455173, PubMed:21455180, PubMed:21455181, PubMed:22863777, PubMed:28189684). Linear ubiquitination mediated by the LUBAC complex interferes with TNF-induced cell death and thereby prevents inflammation (PubMed:21455173, PubMed:28189684). LUBAC is recruited to the TNF-R1 signaling complex (TNF-RSC) following polyubiquitination of TNF-RSC components by BIRC2 and/or BIRC3 and to conjugate linear polyubiquitin to IKBKG and possibly other components contributing to the stability of the complex (PubMed:20005846, PubMed:27458237). The LUBAC complex is also involved in innate immunity by conjugating linear polyubiquitin chains at the surface of bacteria invading the cytosol to form the ubiquitin coat surrounding bacteria (PubMed:28481331, PubMed:34012115). LUBAC is not able to initiate formation of the bacterial ubiquitin coat, and can only promote formation of linear polyubiquitins on pre-existing ubiquitin (PubMed:28481331). Recruited to the surface of bacteria by RNF213, which initiates the bacterial ubiquitin coat (PubMed:34012115). The bacterial ubiquitin coat acts as an 'eat-me' signal for xenophagy and promotes NF-kappa-B activation (PubMed:28481331, PubMed:34012115). Together with OTULIN, the LUBAC complex regulates the canonical Wnt signaling during angiogenesis (PubMed:23708998). RNF31 is required for linear ubiquitination of BCL10, thereby promoting TCR-induced NF-kappa-B activation (PubMed:27777308). Binds polyubiquitin of different linkage types (PubMed:23708998).</text>
</comment>
<comment type="catalytic activity">
    <reaction evidence="9 10 11 28">
        <text>[E2 ubiquitin-conjugating enzyme]-S-ubiquitinyl-L-cysteine + [acceptor protein]-L-lysine = [E2 ubiquitin-conjugating enzyme]-L-cysteine + [acceptor protein]-N(6)-ubiquitinyl-L-lysine.</text>
        <dbReference type="EC" id="2.3.2.31"/>
    </reaction>
</comment>
<comment type="pathway">
    <text evidence="9 10 11 28">Protein modification; protein ubiquitination.</text>
</comment>
<comment type="subunit">
    <text evidence="1 9 11 12 13 14 15 17 18 19 21 22 23 25 26 27 28">Component of the LUBAC complex (linear ubiquitin chain assembly complex) which consists of SHARPIN, RBCK1 and RNF31 (PubMed:17006537, PubMed:21455173, PubMed:21455180, PubMed:21455181, PubMed:28481331). LUBAC has a MW of approximately 600 kDa suggesting a heteromultimeric assembly of its subunits (PubMed:17006537, PubMed:21455173, PubMed:21455180, PubMed:21455181). Associates with the TNF-R1 signaling complex (TNF-RSC) in a stimulation-dependent manner (PubMed:20005846). Interacts (via the PUB domain) with OTULIN (via the PIM motif); the interaction is direct (PubMed:23708998, PubMed:24726323, PubMed:24726327). Interacts (via the PUB domain) with VCP (via the PIM motif) (PubMed:24726327). Interacts (via the PUB domain) with SPATA2 (via the PIM motif); interaction is direct and bridges RNF31 and CYLD (PubMed:27458237, PubMed:27545878, PubMed:27591049, PubMed:28189684). Interacts with CYLD; the interaction is indirect and is mediated via SPATA2 (PubMed:26997266, PubMed:27458237, PubMed:27545878). Interacts with MUSK (By similarity). Interacts with CARD11, promoting linear ubiquitination of BCL10 (PubMed:27777308).</text>
</comment>
<comment type="subunit">
    <text evidence="24">(Microbial infection) Interacts with S.flexneri E3 ubiquitin-protein ligases IpaH1.4 and IpaH2.5, leading to its ubiquitination.</text>
</comment>
<comment type="interaction">
    <interactant intactId="EBI-948111">
        <id>Q96EP0</id>
    </interactant>
    <interactant intactId="EBI-930964">
        <id>P54253</id>
        <label>ATXN1</label>
    </interactant>
    <organismsDiffer>false</organismsDiffer>
    <experiments>4</experiments>
</comment>
<comment type="interaction">
    <interactant intactId="EBI-948111">
        <id>Q96EP0</id>
    </interactant>
    <interactant intactId="EBI-946046">
        <id>P54252</id>
        <label>ATXN3</label>
    </interactant>
    <organismsDiffer>false</organismsDiffer>
    <experiments>3</experiments>
</comment>
<comment type="interaction">
    <interactant intactId="EBI-948111">
        <id>Q96EP0</id>
    </interactant>
    <interactant intactId="EBI-395638">
        <id>O14645</id>
        <label>DNALI1</label>
    </interactant>
    <organismsDiffer>false</organismsDiffer>
    <experiments>3</experiments>
</comment>
<comment type="interaction">
    <interactant intactId="EBI-948111">
        <id>Q96EP0</id>
    </interactant>
    <interactant intactId="EBI-6398041">
        <id>Q9UMF0</id>
        <label>ICAM5</label>
    </interactant>
    <organismsDiffer>false</organismsDiffer>
    <experiments>3</experiments>
</comment>
<comment type="interaction">
    <interactant intactId="EBI-948111">
        <id>Q96EP0</id>
    </interactant>
    <interactant intactId="EBI-81279">
        <id>Q9Y6K9</id>
        <label>IKBKG</label>
    </interactant>
    <organismsDiffer>false</organismsDiffer>
    <experiments>10</experiments>
</comment>
<comment type="interaction">
    <interactant intactId="EBI-948111">
        <id>Q96EP0</id>
    </interactant>
    <interactant intactId="EBI-948266">
        <id>O14901</id>
        <label>KLF11</label>
    </interactant>
    <organismsDiffer>false</organismsDiffer>
    <experiments>3</experiments>
</comment>
<comment type="interaction">
    <interactant intactId="EBI-948111">
        <id>Q96EP0</id>
    </interactant>
    <interactant intactId="EBI-2811583">
        <id>Q9BVL2</id>
        <label>NUP58</label>
    </interactant>
    <organismsDiffer>false</organismsDiffer>
    <experiments>3</experiments>
</comment>
<comment type="interaction">
    <interactant intactId="EBI-948111">
        <id>Q96EP0</id>
    </interactant>
    <interactant intactId="EBI-2340624">
        <id>Q9BYM8</id>
        <label>RBCK1</label>
    </interactant>
    <organismsDiffer>false</organismsDiffer>
    <experiments>50</experiments>
</comment>
<comment type="interaction">
    <interactant intactId="EBI-948111">
        <id>Q96EP0</id>
    </interactant>
    <interactant intactId="EBI-948111">
        <id>Q96EP0</id>
        <label>RNF31</label>
    </interactant>
    <organismsDiffer>false</organismsDiffer>
    <experiments>3</experiments>
</comment>
<comment type="interaction">
    <interactant intactId="EBI-948111">
        <id>Q96EP0</id>
    </interactant>
    <interactant intactId="EBI-3942966">
        <id>Q9H0F6</id>
        <label>SHARPIN</label>
    </interactant>
    <organismsDiffer>false</organismsDiffer>
    <experiments>34</experiments>
</comment>
<comment type="interaction">
    <interactant intactId="EBI-948111">
        <id>Q96EP0</id>
    </interactant>
    <interactant intactId="EBI-347161">
        <id>P84022</id>
        <label>SMAD3</label>
    </interactant>
    <organismsDiffer>false</organismsDiffer>
    <experiments>2</experiments>
</comment>
<comment type="interaction">
    <interactant intactId="EBI-948111">
        <id>Q96EP0</id>
    </interactant>
    <interactant intactId="EBI-347677">
        <id>P62837</id>
        <label>UBE2D2</label>
    </interactant>
    <organismsDiffer>false</organismsDiffer>
    <experiments>3</experiments>
</comment>
<comment type="interaction">
    <interactant intactId="EBI-948111">
        <id>Q96EP0</id>
    </interactant>
    <interactant intactId="EBI-6115874">
        <id>Q9QYP6</id>
        <label>Azi2</label>
    </interactant>
    <organismsDiffer>true</organismsDiffer>
    <experiments>2</experiments>
</comment>
<comment type="interaction">
    <interactant intactId="EBI-948111">
        <id>Q96EP0</id>
    </interactant>
    <interactant intactId="EBI-6116765">
        <id>Q4VA12</id>
        <label>Traf1</label>
    </interactant>
    <organismsDiffer>true</organismsDiffer>
    <experiments>2</experiments>
</comment>
<comment type="interaction">
    <interactant intactId="EBI-10225152">
        <id>Q96EP0-3</id>
    </interactant>
    <interactant intactId="EBI-1104933">
        <id>Q8N4L8</id>
        <label>CCDC24</label>
    </interactant>
    <organismsDiffer>false</organismsDiffer>
    <experiments>3</experiments>
</comment>
<comment type="interaction">
    <interactant intactId="EBI-10225152">
        <id>Q96EP0-3</id>
    </interactant>
    <interactant intactId="EBI-1044640">
        <id>Q9BYQ4</id>
        <label>KRTAP9-2</label>
    </interactant>
    <organismsDiffer>false</organismsDiffer>
    <experiments>3</experiments>
</comment>
<comment type="interaction">
    <interactant intactId="EBI-10225152">
        <id>Q96EP0-3</id>
    </interactant>
    <interactant intactId="EBI-10246938">
        <id>Q5TAL4</id>
        <label>SNRPC</label>
    </interactant>
    <organismsDiffer>false</organismsDiffer>
    <experiments>3</experiments>
</comment>
<comment type="interaction">
    <interactant intactId="EBI-10225152">
        <id>Q96EP0-3</id>
    </interactant>
    <interactant intactId="EBI-717810">
        <id>Q08117</id>
        <label>TLE5</label>
    </interactant>
    <organismsDiffer>false</organismsDiffer>
    <experiments>3</experiments>
</comment>
<comment type="interaction">
    <interactant intactId="EBI-10225152">
        <id>Q96EP0-3</id>
    </interactant>
    <interactant intactId="EBI-717229">
        <id>Q9Y5U2</id>
        <label>TSSC4</label>
    </interactant>
    <organismsDiffer>false</organismsDiffer>
    <experiments>3</experiments>
</comment>
<comment type="interaction">
    <interactant intactId="EBI-10225152">
        <id>Q96EP0-3</id>
    </interactant>
    <interactant intactId="EBI-10249550">
        <id>Q6EMK4</id>
        <label>VASN</label>
    </interactant>
    <organismsDiffer>false</organismsDiffer>
    <experiments>3</experiments>
</comment>
<comment type="subcellular location">
    <subcellularLocation>
        <location evidence="1">Cytoplasm</location>
    </subcellularLocation>
</comment>
<comment type="alternative products">
    <event type="alternative splicing"/>
    <isoform>
        <id>Q96EP0-1</id>
        <name>1</name>
        <sequence type="displayed"/>
    </isoform>
    <isoform>
        <id>Q96EP0-2</id>
        <name>2</name>
        <sequence type="described" ref="VSP_009647 VSP_009648"/>
    </isoform>
    <isoform>
        <id>Q96EP0-3</id>
        <name>3</name>
        <sequence type="described" ref="VSP_014006 VSP_014007"/>
    </isoform>
</comment>
<comment type="tissue specificity">
    <text evidence="8">Expressed in both normal and transformed breast epithelial cell lines.</text>
</comment>
<comment type="domain">
    <text evidence="18 19">The PUB domain mediates interaction with the PIM motifs of VCP and RNF31, with a strong preference for RNF31.</text>
</comment>
<comment type="domain">
    <text evidence="14">The RanBP2-type zinc fingers mediate the specific interaction with ubiquitin.</text>
</comment>
<comment type="domain">
    <text>The UBA domain mediates association with RBCK1/HOIL1 via interaction with its UBL domain.</text>
</comment>
<comment type="domain">
    <text evidence="16">RING 1 and IBR zinc-fingers catalyze the first step transfer of ubiquitin from the E2 onto RING 2, to transiently form a HECT-like covalent thioester intermediate.</text>
</comment>
<comment type="domain">
    <text evidence="16">The linear ubiquitin chain determining domain (LDD) mediates the final transfer of ubiquitin from RING 2 onto the N-terminus of a target ubiquitin.</text>
</comment>
<comment type="PTM">
    <text evidence="18">Autoubiquitinated (PubMed:24726323). Interaction with OTULIN is required to suppress formation of 'Met-1'-linked polyubiquitin chains and prevent subsequent inactivation of the LUBAC complex (PubMed:24726323).</text>
</comment>
<comment type="PTM">
    <text evidence="27">Cleaved by caspase during apoptosis.</text>
</comment>
<comment type="PTM">
    <text evidence="24 28 31">(Microbial infection) Ubiquitinated by S.flexneri E3 ubiquitin-protein ligases IpaH1.4 and IpaH2.5, leading to its degradation by the proteasome, thereby preventing formation of the bacterial ubiquitin coat and activation of innate immunity.</text>
</comment>
<comment type="disease" evidence="20 29">
    <disease id="DI-06795">
        <name>Immunodeficiency 115 with autoinflammation</name>
        <acronym>IMD115</acronym>
        <description>An autosomal recessive immunologic disorder manifesting in early infancy and characterized by combined immunodeficiency, recurrent bacterial, viral, and fungal infections, as well as autoinflammatory features, including arthritis and dermatitis.</description>
        <dbReference type="MIM" id="620632"/>
    </disease>
    <text evidence="29">The disease is caused by variants affecting the gene represented in this entry. The genetic variation producing the missense variant p.Q399H, associated with IMD115, has been shown to predominantly affect splicing, leading to in-frame skipping of exon 9 and lack of 84 amino acids from residue 496 to 579.</text>
</comment>
<comment type="similarity">
    <text evidence="35">Belongs to the RBR family.</text>
</comment>
<comment type="sequence caution" evidence="35">
    <conflict type="erroneous termination">
        <sequence resource="EMBL-CDS" id="BAB15675"/>
    </conflict>
    <text>Truncated C-terminus.</text>
</comment>
<comment type="sequence caution" evidence="35">
    <conflict type="frameshift">
        <sequence resource="EMBL-CDS" id="BAB15675"/>
    </conflict>
</comment>
<comment type="sequence caution" evidence="35">
    <conflict type="miscellaneous discrepancy">
        <sequence resource="EMBL-CDS" id="BAB15675"/>
    </conflict>
    <text>Intron retention.</text>
</comment>
<comment type="sequence caution" evidence="35">
    <conflict type="erroneous initiation">
        <sequence resource="EMBL-CDS" id="BAB70948"/>
    </conflict>
</comment>
<sequence>MPGEEEERAFLVAREELASALRRDSGQAFSLEQLRPLLASSLPLAARYLQLDAARLVRCNAHGEPRNYLNTLSTALNILEKYGRNLLSPQRPRYWRGVKFNNPVFRSTVDAVQGGRDVLRLYGYTEEQPDGLSFPEGQEEPDEHQVATVTLEVLLLRTELSLLLQNTHPRQQALEQLLEDKVEDDMLQLSEFDPLLREIAPGPLTTPSVPGSTPGPCFLCGSAPGTLHCPSCKQALCPACDHLFHGHPSRAHHLRQTLPGVLQGTHLSPSLPASAQPRPQSTSLLALGDSSLSSPNPASAHLPWHCAACAMLNEPWAVLCVACDRPRGCKGLGLGTEGPQGTGGLEPDLARGRWACQSCTFENEAAAVLCSICERPRLAQPPSLVVDSRDAGICLQPLQQGDALLASAQSQVWYCIHCTFCNSSPGWVCVMCNRTSSPIPAQHAPRPYASSLEKGPPKPGPPRRLSAPLPSSCGDPEKQRQDKMREEGLQLVSMIREGEAAGACPEEIFSALQYSGTEVPLQWLRSELPYVLEMVAELAGQQDPGLGAFSCQEARRAWLDRHGNLDEAVEECVRTRRRKVQELQSLGFGPEEGSLQALFQHGGDVSRALTELQRQRLEPFRQRLWDSGPEPTPSWDGPDKQSLVRRLLAVYALPSWGRAELALSLLQETPRNYELGDVVEAVRHSQDRAFLRRLLAQECAVCGWALPHNRMQALTSCECTICPDCFRQHFTIALKEKHITDMVCPACGRPDLTDDTQLLSYFSTLDIQLRESLEPDAYALFHKKLTEGVLMRDPKFLWCAQCSFGFIYEREQLEATCPQCHQTFCVRCKRQWEEQHRGRSCEDFQNWKRMNDPEYQAQGLAMYLQENGIDCPKCKFSYALARGGCMHFHCTQCRHQFCSGCYNAFYAKNKCPEPNCRVKKSLHGHHPRDCLFYLRDWTALRLQKLLQDNNVMFNTEPPAGARAVPGGGCRVIEQKEVPNGLRDEACGKETPAGYAGLCQAHYKEYLVSLINAHSLDPATLYEVEELETATERYLHVRPQPLAGEDPPAYQARLLQKLTEEVPLGQSIPRRRK</sequence>
<feature type="chain" id="PRO_0000056069" description="E3 ubiquitin-protein ligase RNF31">
    <location>
        <begin position="1"/>
        <end position="1072"/>
    </location>
</feature>
<feature type="domain" description="PUB" evidence="2">
    <location>
        <begin position="71"/>
        <end position="142"/>
    </location>
</feature>
<feature type="domain" description="UBA" evidence="3">
    <location>
        <begin position="564"/>
        <end position="615"/>
    </location>
</feature>
<feature type="zinc finger region" description="RanBP2-type 1" evidence="4">
    <location>
        <begin position="299"/>
        <end position="329"/>
    </location>
</feature>
<feature type="zinc finger region" description="RanBP2-type 2" evidence="4">
    <location>
        <begin position="350"/>
        <end position="379"/>
    </location>
</feature>
<feature type="zinc finger region" description="RanBP2-type 3" evidence="4">
    <location>
        <begin position="409"/>
        <end position="438"/>
    </location>
</feature>
<feature type="zinc finger region" description="RING-type 1" evidence="5">
    <location>
        <begin position="699"/>
        <end position="749"/>
    </location>
</feature>
<feature type="zinc finger region" description="IBR-type" evidence="5">
    <location>
        <begin position="779"/>
        <end position="841"/>
    </location>
</feature>
<feature type="zinc finger region" description="RING-type 2; atypical" evidence="5">
    <location>
        <begin position="871"/>
        <end position="901"/>
    </location>
</feature>
<feature type="region of interest" description="Polyubiquitin-binding">
    <location>
        <begin position="1"/>
        <end position="485"/>
    </location>
</feature>
<feature type="region of interest" description="Disordered" evidence="6">
    <location>
        <begin position="263"/>
        <end position="290"/>
    </location>
</feature>
<feature type="region of interest" description="Disordered" evidence="6">
    <location>
        <begin position="443"/>
        <end position="484"/>
    </location>
</feature>
<feature type="region of interest" description="Interaction with RBCK1">
    <location>
        <begin position="563"/>
        <end position="616"/>
    </location>
</feature>
<feature type="region of interest" description="TRIAD supradomain" evidence="5">
    <location>
        <begin position="695"/>
        <end position="929"/>
    </location>
</feature>
<feature type="region of interest" description="LDD domain">
    <location>
        <begin position="910"/>
        <end position="1072"/>
    </location>
</feature>
<feature type="compositionally biased region" description="Polar residues" evidence="6">
    <location>
        <begin position="265"/>
        <end position="280"/>
    </location>
</feature>
<feature type="compositionally biased region" description="Low complexity" evidence="6">
    <location>
        <begin position="281"/>
        <end position="290"/>
    </location>
</feature>
<feature type="compositionally biased region" description="Low complexity" evidence="6">
    <location>
        <begin position="463"/>
        <end position="472"/>
    </location>
</feature>
<feature type="compositionally biased region" description="Basic and acidic residues" evidence="6">
    <location>
        <begin position="475"/>
        <end position="484"/>
    </location>
</feature>
<feature type="active site" evidence="5">
    <location>
        <position position="885"/>
    </location>
</feature>
<feature type="binding site" evidence="5 31 38 39">
    <location>
        <position position="699"/>
    </location>
    <ligand>
        <name>Zn(2+)</name>
        <dbReference type="ChEBI" id="CHEBI:29105"/>
        <label>1</label>
    </ligand>
</feature>
<feature type="binding site" evidence="5 31 38 39">
    <location>
        <position position="702"/>
    </location>
    <ligand>
        <name>Zn(2+)</name>
        <dbReference type="ChEBI" id="CHEBI:29105"/>
        <label>1</label>
    </ligand>
</feature>
<feature type="binding site" evidence="31 38 39">
    <location>
        <position position="717"/>
    </location>
    <ligand>
        <name>Zn(2+)</name>
        <dbReference type="ChEBI" id="CHEBI:29105"/>
        <label>2</label>
    </ligand>
</feature>
<feature type="binding site" evidence="31 38 39">
    <location>
        <position position="719"/>
    </location>
    <ligand>
        <name>Zn(2+)</name>
        <dbReference type="ChEBI" id="CHEBI:29105"/>
        <label>2</label>
    </ligand>
</feature>
<feature type="binding site" evidence="5 31 38 39">
    <location>
        <position position="722"/>
    </location>
    <ligand>
        <name>Zn(2+)</name>
        <dbReference type="ChEBI" id="CHEBI:29105"/>
        <label>1</label>
    </ligand>
</feature>
<feature type="binding site" evidence="5 31 38 39">
    <location>
        <position position="725"/>
    </location>
    <ligand>
        <name>Zn(2+)</name>
        <dbReference type="ChEBI" id="CHEBI:29105"/>
        <label>1</label>
    </ligand>
</feature>
<feature type="binding site" evidence="31 38 39">
    <location>
        <position position="744"/>
    </location>
    <ligand>
        <name>Zn(2+)</name>
        <dbReference type="ChEBI" id="CHEBI:29105"/>
        <label>2</label>
    </ligand>
</feature>
<feature type="binding site" evidence="31 38 39">
    <location>
        <position position="747"/>
    </location>
    <ligand>
        <name>Zn(2+)</name>
        <dbReference type="ChEBI" id="CHEBI:29105"/>
        <label>2</label>
    </ligand>
</feature>
<feature type="binding site" evidence="5">
    <location>
        <position position="799"/>
    </location>
    <ligand>
        <name>Zn(2+)</name>
        <dbReference type="ChEBI" id="CHEBI:29105"/>
        <label>3</label>
    </ligand>
</feature>
<feature type="binding site" evidence="5">
    <location>
        <position position="802"/>
    </location>
    <ligand>
        <name>Zn(2+)</name>
        <dbReference type="ChEBI" id="CHEBI:29105"/>
        <label>3</label>
    </ligand>
</feature>
<feature type="binding site" evidence="5">
    <location>
        <position position="817"/>
    </location>
    <ligand>
        <name>Zn(2+)</name>
        <dbReference type="ChEBI" id="CHEBI:29105"/>
        <label>3</label>
    </ligand>
</feature>
<feature type="binding site" evidence="5">
    <location>
        <position position="820"/>
    </location>
    <ligand>
        <name>Zn(2+)</name>
        <dbReference type="ChEBI" id="CHEBI:29105"/>
        <label>3</label>
    </ligand>
</feature>
<feature type="binding site" evidence="5">
    <location>
        <position position="825"/>
    </location>
    <ligand>
        <name>Zn(2+)</name>
        <dbReference type="ChEBI" id="CHEBI:29105"/>
        <label>4</label>
    </ligand>
</feature>
<feature type="binding site" evidence="5">
    <location>
        <position position="828"/>
    </location>
    <ligand>
        <name>Zn(2+)</name>
        <dbReference type="ChEBI" id="CHEBI:29105"/>
        <label>4</label>
    </ligand>
</feature>
<feature type="binding site" evidence="5">
    <location>
        <position position="836"/>
    </location>
    <ligand>
        <name>Zn(2+)</name>
        <dbReference type="ChEBI" id="CHEBI:29105"/>
        <label>4</label>
    </ligand>
</feature>
<feature type="binding site" evidence="5">
    <location>
        <position position="841"/>
    </location>
    <ligand>
        <name>Zn(2+)</name>
        <dbReference type="ChEBI" id="CHEBI:29105"/>
        <label>4</label>
    </ligand>
</feature>
<feature type="binding site" evidence="5">
    <location>
        <position position="871"/>
    </location>
    <ligand>
        <name>Zn(2+)</name>
        <dbReference type="ChEBI" id="CHEBI:29105"/>
        <label>5</label>
    </ligand>
</feature>
<feature type="binding site" evidence="5">
    <location>
        <position position="874"/>
    </location>
    <ligand>
        <name>Zn(2+)</name>
        <dbReference type="ChEBI" id="CHEBI:29105"/>
        <label>5</label>
    </ligand>
</feature>
<feature type="binding site" evidence="5">
    <location>
        <position position="890"/>
    </location>
    <ligand>
        <name>Zn(2+)</name>
        <dbReference type="ChEBI" id="CHEBI:29105"/>
        <label>5</label>
    </ligand>
</feature>
<feature type="binding site" evidence="5">
    <location>
        <position position="893"/>
    </location>
    <ligand>
        <name>Zn(2+)</name>
        <dbReference type="ChEBI" id="CHEBI:29105"/>
        <label>5</label>
    </ligand>
</feature>
<feature type="binding site" evidence="5">
    <location>
        <position position="898"/>
    </location>
    <ligand>
        <name>Zn(2+)</name>
        <dbReference type="ChEBI" id="CHEBI:29105"/>
        <label>6</label>
    </ligand>
</feature>
<feature type="binding site" evidence="5">
    <location>
        <position position="901"/>
    </location>
    <ligand>
        <name>Zn(2+)</name>
        <dbReference type="ChEBI" id="CHEBI:29105"/>
        <label>6</label>
    </ligand>
</feature>
<feature type="binding site" evidence="5">
    <location>
        <position position="916"/>
    </location>
    <ligand>
        <name>Zn(2+)</name>
        <dbReference type="ChEBI" id="CHEBI:29105"/>
        <label>6</label>
    </ligand>
</feature>
<feature type="binding site" evidence="5">
    <location>
        <position position="925"/>
    </location>
    <ligand>
        <name>Zn(2+)</name>
        <dbReference type="ChEBI" id="CHEBI:29105"/>
        <label>6</label>
    </ligand>
</feature>
<feature type="site" description="Cleavage; by caspase" evidence="27">
    <location>
        <begin position="390"/>
        <end position="391"/>
    </location>
</feature>
<feature type="modified residue" description="Phosphoserine" evidence="42 43">
    <location>
        <position position="383"/>
    </location>
</feature>
<feature type="modified residue" description="Phosphoserine" evidence="40 41 42 43">
    <location>
        <position position="466"/>
    </location>
</feature>
<feature type="cross-link" description="(Microbial infection) Glycyl lysine isopeptide (Lys-Gly) (interchain with G-Cter in ubiquitin)" evidence="24">
    <location>
        <position position="735"/>
    </location>
</feature>
<feature type="cross-link" description="(Microbial infection) Glycyl lysine isopeptide (Lys-Gly) (interchain with G-Cter in ubiquitin)" evidence="24">
    <location>
        <position position="783"/>
    </location>
</feature>
<feature type="cross-link" description="(Microbial infection) Glycyl lysine isopeptide (Lys-Gly) (interchain with G-Cter in ubiquitin)" evidence="24">
    <location>
        <position position="875"/>
    </location>
</feature>
<feature type="splice variant" id="VSP_014006" description="In isoform 3." evidence="33">
    <location>
        <begin position="1"/>
        <end position="151"/>
    </location>
</feature>
<feature type="splice variant" id="VSP_009647" description="In isoform 2." evidence="32">
    <location>
        <begin position="73"/>
        <end position="630"/>
    </location>
</feature>
<feature type="splice variant" id="VSP_014007" description="In isoform 3." evidence="33">
    <original>EVLLLRTELSLLL</original>
    <variation>MDLCTRAGEPSLT</variation>
    <location>
        <begin position="152"/>
        <end position="164"/>
    </location>
</feature>
<feature type="splice variant" id="VSP_009648" description="In isoform 2." evidence="32">
    <location>
        <begin position="833"/>
        <end position="841"/>
    </location>
</feature>
<feature type="sequence variant" id="VAR_089148" description="In IMD115; likely pathogenic; may affect protein expression level; linear ubiquitination and NF-kappa-B activation are impaired in the patient's fibroblasts stimulated by IL1B or TNF, a phenotype that can be restored by the reintroduction of the wild-type protein; the genetic variation producing this missense variant does not affect splicing; dbSNP:rs794729666." evidence="20">
    <original>L</original>
    <variation>P</variation>
    <location>
        <position position="72"/>
    </location>
</feature>
<feature type="sequence variant" id="VAR_089149" description="In IMD115; uncertain significance; decreased interaction with SHARPIN; does not affect interaction with RBCK1; the genetic variation producing this missense variant predominantly affects splicing, leading to in-frame skipping of exon 9 and lack of 84 amino acids from residue 496 to 579." evidence="29">
    <original>Q</original>
    <variation>H</variation>
    <location>
        <position position="399"/>
    </location>
</feature>
<feature type="sequence variant" id="VAR_052102" description="In dbSNP:rs2277484." evidence="7">
    <original>V</original>
    <variation>I</variation>
    <location>
        <position position="1061"/>
    </location>
</feature>
<feature type="mutagenesis site" description="Abolished interaction with OTULIN." evidence="18">
    <original>Y</original>
    <variation>A</variation>
    <location>
        <position position="82"/>
    </location>
</feature>
<feature type="mutagenesis site" description="Reduced interaction with OTULIN." evidence="18">
    <original>Y</original>
    <variation>F</variation>
    <location>
        <position position="82"/>
    </location>
</feature>
<feature type="mutagenesis site" description="Reduced interaction with OTULIN." evidence="18">
    <original>N</original>
    <variation>A</variation>
    <location>
        <position position="85"/>
    </location>
</feature>
<feature type="mutagenesis site" description="Reduced interaction with OTULIN." evidence="18">
    <original>K</original>
    <variation>E</variation>
    <location>
        <position position="99"/>
    </location>
</feature>
<feature type="mutagenesis site" description="Does not affect interaction with OTULIN." evidence="18">
    <original>N</original>
    <variation>R</variation>
    <location>
        <position position="101"/>
    </location>
</feature>
<feature type="mutagenesis site" description="Abolished interaction with SPATA2." evidence="22">
    <original>N</original>
    <variation>A</variation>
    <location>
        <position position="102"/>
    </location>
</feature>
<feature type="mutagenesis site" description="Abolished interaction with OTULIN." evidence="18">
    <original>N</original>
    <variation>D</variation>
    <location>
        <position position="102"/>
    </location>
</feature>
<feature type="mutagenesis site" description="Reduced interaction with OTULIN." evidence="18">
    <original>V</original>
    <variation>A</variation>
    <location>
        <position position="104"/>
    </location>
</feature>
<feature type="mutagenesis site" description="Decreased ubiquitin-binding and ability to promote formation of the bacterial ubiquitin coat." evidence="28">
    <original>T</original>
    <variation>A</variation>
    <location>
        <position position="360"/>
    </location>
</feature>
<feature type="mutagenesis site" description="Abolishes cleavage by caspase." evidence="27">
    <original>D</original>
    <variation>A</variation>
    <location>
        <position position="390"/>
    </location>
</feature>
<feature type="mutagenesis site" description="Abolishes polyubiquitination activity of LUBAC; when associated with S-702." evidence="9 14">
    <original>C</original>
    <variation>S</variation>
    <location>
        <position position="699"/>
    </location>
</feature>
<feature type="mutagenesis site" description="Abolishes polyubiquitination activity of LUBAC; when associated with S-699." evidence="9 14">
    <original>C</original>
    <variation>S</variation>
    <location>
        <position position="702"/>
    </location>
</feature>
<feature type="mutagenesis site" description="Reduced ubiquitination; when associated with R-783 and R-875." evidence="24">
    <original>K</original>
    <variation>R</variation>
    <location>
        <position position="735"/>
    </location>
</feature>
<feature type="mutagenesis site" description="Reduced ubiquitination; when associated with R-735 and R-875." evidence="24">
    <original>K</original>
    <variation>R</variation>
    <location>
        <position position="783"/>
    </location>
</feature>
<feature type="mutagenesis site" description="Abolishes polyubiquitination activity of LUBAC; when associated with S-874." evidence="9 14">
    <original>C</original>
    <variation>S</variation>
    <location>
        <position position="871"/>
    </location>
</feature>
<feature type="mutagenesis site" description="Abolishes polyubiquitination activity of LUBAC; when associated with S-871." evidence="9 14">
    <original>C</original>
    <variation>S</variation>
    <location>
        <position position="874"/>
    </location>
</feature>
<feature type="mutagenesis site" description="Reduced ubiquitination; when associated with R-735 and R-783." evidence="24">
    <original>K</original>
    <variation>R</variation>
    <location>
        <position position="875"/>
    </location>
</feature>
<feature type="mutagenesis site" description="Abolished E3 ubiquitin-protein ligase activity and ability to promote formation of the bacterial ubiquitin coat; when associated with A-935 and A-983." evidence="28">
    <original>C</original>
    <variation>A</variation>
    <location>
        <position position="885"/>
    </location>
</feature>
<feature type="mutagenesis site" description="Abolished E3 ubiquitin-protein ligase activity and ability to promote formation of the bacterial ubiquitin coat; when associated with A-885 and A-983." evidence="28">
    <original>R</original>
    <variation>A</variation>
    <location>
        <position position="935"/>
    </location>
</feature>
<feature type="mutagenesis site" description="Abolished E3 ubiquitin-protein ligase activity and ability to promote formation of the bacterial ubiquitin coat; when associated with A-885 and A-935." evidence="28">
    <original>D</original>
    <variation>A</variation>
    <location>
        <position position="983"/>
    </location>
</feature>
<feature type="sequence conflict" description="In Ref. 1; AAP12522." evidence="35" ref="1">
    <original>P</original>
    <variation>S</variation>
    <location>
        <position position="529"/>
    </location>
</feature>
<feature type="sequence conflict" description="In Ref. 3; BAA91450." evidence="35" ref="3">
    <original>A</original>
    <variation>V</variation>
    <location>
        <position position="800"/>
    </location>
</feature>
<feature type="sequence conflict" description="In Ref. 3; BAB15675." evidence="35" ref="3">
    <original>H</original>
    <variation>R</variation>
    <location>
        <position position="925"/>
    </location>
</feature>
<feature type="sequence conflict" description="In Ref. 3; BAB15675." evidence="35" ref="3">
    <original>Y</original>
    <variation>N</variation>
    <location>
        <position position="1005"/>
    </location>
</feature>
<feature type="sequence conflict" description="In Ref. 3; BAB15675." evidence="35" ref="3">
    <original>A</original>
    <variation>S</variation>
    <location>
        <position position="1018"/>
    </location>
</feature>
<feature type="sequence conflict" description="In Ref. 3; BAB15675." evidence="35" ref="3">
    <original>Y</original>
    <variation>D</variation>
    <location>
        <position position="1021"/>
    </location>
</feature>
<feature type="helix" evidence="48">
    <location>
        <begin position="4"/>
        <end position="23"/>
    </location>
</feature>
<feature type="helix" evidence="48">
    <location>
        <begin position="31"/>
        <end position="38"/>
    </location>
</feature>
<feature type="helix" evidence="48">
    <location>
        <begin position="44"/>
        <end position="47"/>
    </location>
</feature>
<feature type="strand" evidence="48">
    <location>
        <begin position="49"/>
        <end position="51"/>
    </location>
</feature>
<feature type="helix" evidence="48">
    <location>
        <begin position="53"/>
        <end position="58"/>
    </location>
</feature>
<feature type="helix" evidence="48">
    <location>
        <begin position="65"/>
        <end position="86"/>
    </location>
</feature>
<feature type="strand" evidence="48">
    <location>
        <begin position="88"/>
        <end position="90"/>
    </location>
</feature>
<feature type="turn" evidence="48">
    <location>
        <begin position="93"/>
        <end position="96"/>
    </location>
</feature>
<feature type="strand" evidence="48">
    <location>
        <begin position="97"/>
        <end position="102"/>
    </location>
</feature>
<feature type="helix" evidence="48">
    <location>
        <begin position="103"/>
        <end position="107"/>
    </location>
</feature>
<feature type="helix" evidence="48">
    <location>
        <begin position="109"/>
        <end position="111"/>
    </location>
</feature>
<feature type="helix" evidence="48">
    <location>
        <begin position="115"/>
        <end position="122"/>
    </location>
</feature>
<feature type="strand" evidence="48">
    <location>
        <begin position="126"/>
        <end position="128"/>
    </location>
</feature>
<feature type="strand" evidence="48">
    <location>
        <begin position="131"/>
        <end position="133"/>
    </location>
</feature>
<feature type="helix" evidence="48">
    <location>
        <begin position="143"/>
        <end position="164"/>
    </location>
</feature>
<feature type="helix" evidence="48">
    <location>
        <begin position="171"/>
        <end position="177"/>
    </location>
</feature>
<feature type="turn" evidence="47">
    <location>
        <begin position="357"/>
        <end position="359"/>
    </location>
</feature>
<feature type="turn" evidence="47">
    <location>
        <begin position="371"/>
        <end position="373"/>
    </location>
</feature>
<feature type="helix" evidence="53">
    <location>
        <begin position="490"/>
        <end position="501"/>
    </location>
</feature>
<feature type="helix" evidence="53">
    <location>
        <begin position="505"/>
        <end position="514"/>
    </location>
</feature>
<feature type="helix" evidence="53">
    <location>
        <begin position="521"/>
        <end position="526"/>
    </location>
</feature>
<feature type="helix" evidence="53">
    <location>
        <begin position="528"/>
        <end position="542"/>
    </location>
</feature>
<feature type="helix" evidence="44">
    <location>
        <begin position="544"/>
        <end position="546"/>
    </location>
</feature>
<feature type="helix" evidence="53">
    <location>
        <begin position="551"/>
        <end position="560"/>
    </location>
</feature>
<feature type="turn" evidence="53">
    <location>
        <begin position="561"/>
        <end position="563"/>
    </location>
</feature>
<feature type="helix" evidence="53">
    <location>
        <begin position="565"/>
        <end position="584"/>
    </location>
</feature>
<feature type="turn" evidence="53">
    <location>
        <begin position="585"/>
        <end position="587"/>
    </location>
</feature>
<feature type="helix" evidence="53">
    <location>
        <begin position="590"/>
        <end position="592"/>
    </location>
</feature>
<feature type="helix" evidence="53">
    <location>
        <begin position="594"/>
        <end position="600"/>
    </location>
</feature>
<feature type="turn" evidence="53">
    <location>
        <begin position="601"/>
        <end position="603"/>
    </location>
</feature>
<feature type="helix" evidence="53">
    <location>
        <begin position="605"/>
        <end position="625"/>
    </location>
</feature>
<feature type="turn" evidence="54">
    <location>
        <begin position="700"/>
        <end position="702"/>
    </location>
</feature>
<feature type="strand" evidence="54">
    <location>
        <begin position="705"/>
        <end position="707"/>
    </location>
</feature>
<feature type="helix" evidence="54">
    <location>
        <begin position="708"/>
        <end position="710"/>
    </location>
</feature>
<feature type="strand" evidence="54">
    <location>
        <begin position="711"/>
        <end position="713"/>
    </location>
</feature>
<feature type="turn" evidence="51">
    <location>
        <begin position="715"/>
        <end position="717"/>
    </location>
</feature>
<feature type="helix" evidence="54">
    <location>
        <begin position="723"/>
        <end position="736"/>
    </location>
</feature>
<feature type="helix" evidence="54">
    <location>
        <begin position="739"/>
        <end position="741"/>
    </location>
</feature>
<feature type="turn" evidence="54">
    <location>
        <begin position="745"/>
        <end position="747"/>
    </location>
</feature>
<feature type="helix" evidence="54">
    <location>
        <begin position="755"/>
        <end position="757"/>
    </location>
</feature>
<feature type="helix" evidence="54">
    <location>
        <begin position="758"/>
        <end position="772"/>
    </location>
</feature>
<feature type="helix" evidence="54">
    <location>
        <begin position="775"/>
        <end position="787"/>
    </location>
</feature>
<feature type="strand" evidence="51">
    <location>
        <begin position="796"/>
        <end position="798"/>
    </location>
</feature>
<feature type="turn" evidence="51">
    <location>
        <begin position="800"/>
        <end position="802"/>
    </location>
</feature>
<feature type="strand" evidence="51">
    <location>
        <begin position="805"/>
        <end position="807"/>
    </location>
</feature>
<feature type="strand" evidence="51">
    <location>
        <begin position="813"/>
        <end position="816"/>
    </location>
</feature>
<feature type="turn" evidence="51">
    <location>
        <begin position="818"/>
        <end position="820"/>
    </location>
</feature>
<feature type="strand" evidence="51">
    <location>
        <begin position="823"/>
        <end position="825"/>
    </location>
</feature>
<feature type="turn" evidence="51">
    <location>
        <begin position="826"/>
        <end position="828"/>
    </location>
</feature>
<feature type="helix" evidence="51">
    <location>
        <begin position="834"/>
        <end position="836"/>
    </location>
</feature>
<feature type="helix" evidence="51">
    <location>
        <begin position="841"/>
        <end position="849"/>
    </location>
</feature>
<feature type="helix" evidence="51">
    <location>
        <begin position="853"/>
        <end position="858"/>
    </location>
</feature>
<feature type="helix" evidence="45">
    <location>
        <begin position="859"/>
        <end position="864"/>
    </location>
</feature>
<feature type="strand" evidence="45">
    <location>
        <begin position="868"/>
        <end position="870"/>
    </location>
</feature>
<feature type="turn" evidence="50">
    <location>
        <begin position="872"/>
        <end position="874"/>
    </location>
</feature>
<feature type="strand" evidence="45">
    <location>
        <begin position="877"/>
        <end position="879"/>
    </location>
</feature>
<feature type="strand" evidence="50">
    <location>
        <begin position="887"/>
        <end position="889"/>
    </location>
</feature>
<feature type="turn" evidence="50">
    <location>
        <begin position="891"/>
        <end position="893"/>
    </location>
</feature>
<feature type="strand" evidence="50">
    <location>
        <begin position="896"/>
        <end position="898"/>
    </location>
</feature>
<feature type="turn" evidence="50">
    <location>
        <begin position="899"/>
        <end position="901"/>
    </location>
</feature>
<feature type="strand" evidence="50">
    <location>
        <begin position="904"/>
        <end position="906"/>
    </location>
</feature>
<feature type="turn" evidence="52">
    <location>
        <begin position="908"/>
        <end position="910"/>
    </location>
</feature>
<feature type="turn" evidence="45">
    <location>
        <begin position="917"/>
        <end position="920"/>
    </location>
</feature>
<feature type="strand" evidence="45">
    <location>
        <begin position="921"/>
        <end position="924"/>
    </location>
</feature>
<feature type="strand" evidence="49">
    <location>
        <begin position="928"/>
        <end position="930"/>
    </location>
</feature>
<feature type="helix" evidence="50">
    <location>
        <begin position="931"/>
        <end position="934"/>
    </location>
</feature>
<feature type="helix" evidence="50">
    <location>
        <begin position="939"/>
        <end position="948"/>
    </location>
</feature>
<feature type="strand" evidence="46">
    <location>
        <begin position="965"/>
        <end position="968"/>
    </location>
</feature>
<feature type="strand" evidence="45">
    <location>
        <begin position="972"/>
        <end position="977"/>
    </location>
</feature>
<feature type="strand" evidence="45">
    <location>
        <begin position="980"/>
        <end position="985"/>
    </location>
</feature>
<feature type="turn" evidence="50">
    <location>
        <begin position="992"/>
        <end position="996"/>
    </location>
</feature>
<feature type="helix" evidence="50">
    <location>
        <begin position="999"/>
        <end position="1012"/>
    </location>
</feature>
<feature type="helix" evidence="50">
    <location>
        <begin position="1017"/>
        <end position="1020"/>
    </location>
</feature>
<feature type="helix" evidence="50">
    <location>
        <begin position="1023"/>
        <end position="1034"/>
    </location>
</feature>
<feature type="helix" evidence="50">
    <location>
        <begin position="1046"/>
        <end position="1060"/>
    </location>
</feature>
<feature type="strand" evidence="50">
    <location>
        <begin position="1065"/>
        <end position="1067"/>
    </location>
</feature>
<evidence type="ECO:0000250" key="1">
    <source>
        <dbReference type="UniProtKB" id="Q924T7"/>
    </source>
</evidence>
<evidence type="ECO:0000255" key="2"/>
<evidence type="ECO:0000255" key="3">
    <source>
        <dbReference type="PROSITE-ProRule" id="PRU00212"/>
    </source>
</evidence>
<evidence type="ECO:0000255" key="4">
    <source>
        <dbReference type="PROSITE-ProRule" id="PRU00322"/>
    </source>
</evidence>
<evidence type="ECO:0000255" key="5">
    <source>
        <dbReference type="PROSITE-ProRule" id="PRU01221"/>
    </source>
</evidence>
<evidence type="ECO:0000256" key="6">
    <source>
        <dbReference type="SAM" id="MobiDB-lite"/>
    </source>
</evidence>
<evidence type="ECO:0000269" key="7">
    <source>
    </source>
</evidence>
<evidence type="ECO:0000269" key="8">
    <source>
    </source>
</evidence>
<evidence type="ECO:0000269" key="9">
    <source>
    </source>
</evidence>
<evidence type="ECO:0000269" key="10">
    <source>
    </source>
</evidence>
<evidence type="ECO:0000269" key="11">
    <source>
    </source>
</evidence>
<evidence type="ECO:0000269" key="12">
    <source>
    </source>
</evidence>
<evidence type="ECO:0000269" key="13">
    <source>
    </source>
</evidence>
<evidence type="ECO:0000269" key="14">
    <source>
    </source>
</evidence>
<evidence type="ECO:0000269" key="15">
    <source>
    </source>
</evidence>
<evidence type="ECO:0000269" key="16">
    <source>
    </source>
</evidence>
<evidence type="ECO:0000269" key="17">
    <source>
    </source>
</evidence>
<evidence type="ECO:0000269" key="18">
    <source>
    </source>
</evidence>
<evidence type="ECO:0000269" key="19">
    <source>
    </source>
</evidence>
<evidence type="ECO:0000269" key="20">
    <source>
    </source>
</evidence>
<evidence type="ECO:0000269" key="21">
    <source>
    </source>
</evidence>
<evidence type="ECO:0000269" key="22">
    <source>
    </source>
</evidence>
<evidence type="ECO:0000269" key="23">
    <source>
    </source>
</evidence>
<evidence type="ECO:0000269" key="24">
    <source>
    </source>
</evidence>
<evidence type="ECO:0000269" key="25">
    <source>
    </source>
</evidence>
<evidence type="ECO:0000269" key="26">
    <source>
    </source>
</evidence>
<evidence type="ECO:0000269" key="27">
    <source>
    </source>
</evidence>
<evidence type="ECO:0000269" key="28">
    <source>
    </source>
</evidence>
<evidence type="ECO:0000269" key="29">
    <source>
    </source>
</evidence>
<evidence type="ECO:0000269" key="30">
    <source>
    </source>
</evidence>
<evidence type="ECO:0000269" key="31">
    <source>
    </source>
</evidence>
<evidence type="ECO:0000303" key="32">
    <source>
    </source>
</evidence>
<evidence type="ECO:0000303" key="33">
    <source>
    </source>
</evidence>
<evidence type="ECO:0000303" key="34">
    <source>
    </source>
</evidence>
<evidence type="ECO:0000305" key="35"/>
<evidence type="ECO:0000312" key="36">
    <source>
        <dbReference type="HGNC" id="HGNC:16031"/>
    </source>
</evidence>
<evidence type="ECO:0007744" key="37">
    <source>
        <dbReference type="PDB" id="5LJN"/>
    </source>
</evidence>
<evidence type="ECO:0007744" key="38">
    <source>
        <dbReference type="PDB" id="7V8F"/>
    </source>
</evidence>
<evidence type="ECO:0007744" key="39">
    <source>
        <dbReference type="PDB" id="7V8G"/>
    </source>
</evidence>
<evidence type="ECO:0007744" key="40">
    <source>
    </source>
</evidence>
<evidence type="ECO:0007744" key="41">
    <source>
    </source>
</evidence>
<evidence type="ECO:0007744" key="42">
    <source>
    </source>
</evidence>
<evidence type="ECO:0007744" key="43">
    <source>
    </source>
</evidence>
<evidence type="ECO:0007829" key="44">
    <source>
        <dbReference type="PDB" id="4DBG"/>
    </source>
</evidence>
<evidence type="ECO:0007829" key="45">
    <source>
        <dbReference type="PDB" id="4LJO"/>
    </source>
</evidence>
<evidence type="ECO:0007829" key="46">
    <source>
        <dbReference type="PDB" id="4LJP"/>
    </source>
</evidence>
<evidence type="ECO:0007829" key="47">
    <source>
        <dbReference type="PDB" id="4OWF"/>
    </source>
</evidence>
<evidence type="ECO:0007829" key="48">
    <source>
        <dbReference type="PDB" id="4P09"/>
    </source>
</evidence>
<evidence type="ECO:0007829" key="49">
    <source>
        <dbReference type="PDB" id="5EDV"/>
    </source>
</evidence>
<evidence type="ECO:0007829" key="50">
    <source>
        <dbReference type="PDB" id="6KC5"/>
    </source>
</evidence>
<evidence type="ECO:0007829" key="51">
    <source>
        <dbReference type="PDB" id="6SC5"/>
    </source>
</evidence>
<evidence type="ECO:0007829" key="52">
    <source>
        <dbReference type="PDB" id="6SC8"/>
    </source>
</evidence>
<evidence type="ECO:0007829" key="53">
    <source>
        <dbReference type="PDB" id="7UYK"/>
    </source>
</evidence>
<evidence type="ECO:0007829" key="54">
    <source>
        <dbReference type="PDB" id="7V8F"/>
    </source>
</evidence>
<proteinExistence type="evidence at protein level"/>
<keyword id="KW-0002">3D-structure</keyword>
<keyword id="KW-0025">Alternative splicing</keyword>
<keyword id="KW-0963">Cytoplasm</keyword>
<keyword id="KW-0225">Disease variant</keyword>
<keyword id="KW-1017">Isopeptide bond</keyword>
<keyword id="KW-0479">Metal-binding</keyword>
<keyword id="KW-0597">Phosphoprotein</keyword>
<keyword id="KW-1267">Proteomics identification</keyword>
<keyword id="KW-1185">Reference proteome</keyword>
<keyword id="KW-0677">Repeat</keyword>
<keyword id="KW-0808">Transferase</keyword>
<keyword id="KW-0832">Ubl conjugation</keyword>
<keyword id="KW-0833">Ubl conjugation pathway</keyword>
<keyword id="KW-0862">Zinc</keyword>
<keyword id="KW-0863">Zinc-finger</keyword>
<protein>
    <recommendedName>
        <fullName>E3 ubiquitin-protein ligase RNF31</fullName>
        <ecNumber evidence="9 10 11 28">2.3.2.31</ecNumber>
    </recommendedName>
    <alternativeName>
        <fullName evidence="34">HOIL-1-interacting protein</fullName>
        <shortName evidence="34">HOIP</shortName>
    </alternativeName>
    <alternativeName>
        <fullName evidence="36">RING finger protein 31</fullName>
    </alternativeName>
    <alternativeName>
        <fullName evidence="35">RING-type E3 ubiquitin transferase RNF31</fullName>
    </alternativeName>
    <alternativeName>
        <fullName evidence="33">Zinc in-between-RING-finger ubiquitin-associated domain protein</fullName>
    </alternativeName>
</protein>
<reference key="1">
    <citation type="journal article" date="2004" name="Exp. Cell Res.">
        <title>Identification of the protein Zibra, its genomic organization, regulation, and expression in breast cancer cells.</title>
        <authorList>
            <person name="Thompson H.G.R."/>
            <person name="Harris J.W."/>
            <person name="Lin L."/>
            <person name="Brody J.P."/>
        </authorList>
    </citation>
    <scope>NUCLEOTIDE SEQUENCE [MRNA] (ISOFORM 3)</scope>
    <scope>ALTERNATIVE SPLICING</scope>
    <scope>TISSUE SPECIFICITY</scope>
    <source>
        <tissue>Mammary carcinoma</tissue>
    </source>
</reference>
<reference key="2">
    <citation type="journal article" date="2006" name="EMBO J.">
        <title>A ubiquitin ligase complex assembles linear polyubiquitin chains.</title>
        <authorList>
            <person name="Kirisako T."/>
            <person name="Kamei K."/>
            <person name="Murata S."/>
            <person name="Kato M."/>
            <person name="Fukumoto H."/>
            <person name="Kanie M."/>
            <person name="Sano S."/>
            <person name="Tokunaga F."/>
            <person name="Tanaka K."/>
            <person name="Iwai K."/>
        </authorList>
    </citation>
    <scope>NUCLEOTIDE SEQUENCE [MRNA] (ISOFORM 1)</scope>
    <scope>IDENTIFICATION IN THE LUBAC COMPLEX</scope>
    <scope>FUNCTION OF THE LUBAC COMPLEX</scope>
    <scope>CATALYTIC ACTIVITY</scope>
    <scope>PATHWAY</scope>
    <scope>MUTAGENESIS OF CYS-699; CYS-702; CYS-871 AND CYS-874</scope>
</reference>
<reference key="3">
    <citation type="journal article" date="2004" name="Nat. Genet.">
        <title>Complete sequencing and characterization of 21,243 full-length human cDNAs.</title>
        <authorList>
            <person name="Ota T."/>
            <person name="Suzuki Y."/>
            <person name="Nishikawa T."/>
            <person name="Otsuki T."/>
            <person name="Sugiyama T."/>
            <person name="Irie R."/>
            <person name="Wakamatsu A."/>
            <person name="Hayashi K."/>
            <person name="Sato H."/>
            <person name="Nagai K."/>
            <person name="Kimura K."/>
            <person name="Makita H."/>
            <person name="Sekine M."/>
            <person name="Obayashi M."/>
            <person name="Nishi T."/>
            <person name="Shibahara T."/>
            <person name="Tanaka T."/>
            <person name="Ishii S."/>
            <person name="Yamamoto J."/>
            <person name="Saito K."/>
            <person name="Kawai Y."/>
            <person name="Isono Y."/>
            <person name="Nakamura Y."/>
            <person name="Nagahari K."/>
            <person name="Murakami K."/>
            <person name="Yasuda T."/>
            <person name="Iwayanagi T."/>
            <person name="Wagatsuma M."/>
            <person name="Shiratori A."/>
            <person name="Sudo H."/>
            <person name="Hosoiri T."/>
            <person name="Kaku Y."/>
            <person name="Kodaira H."/>
            <person name="Kondo H."/>
            <person name="Sugawara M."/>
            <person name="Takahashi M."/>
            <person name="Kanda K."/>
            <person name="Yokoi T."/>
            <person name="Furuya T."/>
            <person name="Kikkawa E."/>
            <person name="Omura Y."/>
            <person name="Abe K."/>
            <person name="Kamihara K."/>
            <person name="Katsuta N."/>
            <person name="Sato K."/>
            <person name="Tanikawa M."/>
            <person name="Yamazaki M."/>
            <person name="Ninomiya K."/>
            <person name="Ishibashi T."/>
            <person name="Yamashita H."/>
            <person name="Murakawa K."/>
            <person name="Fujimori K."/>
            <person name="Tanai H."/>
            <person name="Kimata M."/>
            <person name="Watanabe M."/>
            <person name="Hiraoka S."/>
            <person name="Chiba Y."/>
            <person name="Ishida S."/>
            <person name="Ono Y."/>
            <person name="Takiguchi S."/>
            <person name="Watanabe S."/>
            <person name="Yosida M."/>
            <person name="Hotuta T."/>
            <person name="Kusano J."/>
            <person name="Kanehori K."/>
            <person name="Takahashi-Fujii A."/>
            <person name="Hara H."/>
            <person name="Tanase T.-O."/>
            <person name="Nomura Y."/>
            <person name="Togiya S."/>
            <person name="Komai F."/>
            <person name="Hara R."/>
            <person name="Takeuchi K."/>
            <person name="Arita M."/>
            <person name="Imose N."/>
            <person name="Musashino K."/>
            <person name="Yuuki H."/>
            <person name="Oshima A."/>
            <person name="Sasaki N."/>
            <person name="Aotsuka S."/>
            <person name="Yoshikawa Y."/>
            <person name="Matsunawa H."/>
            <person name="Ichihara T."/>
            <person name="Shiohata N."/>
            <person name="Sano S."/>
            <person name="Moriya S."/>
            <person name="Momiyama H."/>
            <person name="Satoh N."/>
            <person name="Takami S."/>
            <person name="Terashima Y."/>
            <person name="Suzuki O."/>
            <person name="Nakagawa S."/>
            <person name="Senoh A."/>
            <person name="Mizoguchi H."/>
            <person name="Goto Y."/>
            <person name="Shimizu F."/>
            <person name="Wakebe H."/>
            <person name="Hishigaki H."/>
            <person name="Watanabe T."/>
            <person name="Sugiyama A."/>
            <person name="Takemoto M."/>
            <person name="Kawakami B."/>
            <person name="Yamazaki M."/>
            <person name="Watanabe K."/>
            <person name="Kumagai A."/>
            <person name="Itakura S."/>
            <person name="Fukuzumi Y."/>
            <person name="Fujimori Y."/>
            <person name="Komiyama M."/>
            <person name="Tashiro H."/>
            <person name="Tanigami A."/>
            <person name="Fujiwara T."/>
            <person name="Ono T."/>
            <person name="Yamada K."/>
            <person name="Fujii Y."/>
            <person name="Ozaki K."/>
            <person name="Hirao M."/>
            <person name="Ohmori Y."/>
            <person name="Kawabata A."/>
            <person name="Hikiji T."/>
            <person name="Kobatake N."/>
            <person name="Inagaki H."/>
            <person name="Ikema Y."/>
            <person name="Okamoto S."/>
            <person name="Okitani R."/>
            <person name="Kawakami T."/>
            <person name="Noguchi S."/>
            <person name="Itoh T."/>
            <person name="Shigeta K."/>
            <person name="Senba T."/>
            <person name="Matsumura K."/>
            <person name="Nakajima Y."/>
            <person name="Mizuno T."/>
            <person name="Morinaga M."/>
            <person name="Sasaki M."/>
            <person name="Togashi T."/>
            <person name="Oyama M."/>
            <person name="Hata H."/>
            <person name="Watanabe M."/>
            <person name="Komatsu T."/>
            <person name="Mizushima-Sugano J."/>
            <person name="Satoh T."/>
            <person name="Shirai Y."/>
            <person name="Takahashi Y."/>
            <person name="Nakagawa K."/>
            <person name="Okumura K."/>
            <person name="Nagase T."/>
            <person name="Nomura N."/>
            <person name="Kikuchi H."/>
            <person name="Masuho Y."/>
            <person name="Yamashita R."/>
            <person name="Nakai K."/>
            <person name="Yada T."/>
            <person name="Nakamura Y."/>
            <person name="Ohara O."/>
            <person name="Isogai T."/>
            <person name="Sugano S."/>
        </authorList>
    </citation>
    <scope>NUCLEOTIDE SEQUENCE [LARGE SCALE MRNA] (ISOFORMS 1 AND 2)</scope>
    <scope>VARIANT ILE-1061</scope>
    <source>
        <tissue>Embryo</tissue>
        <tissue>Hair follicle dermal papilla</tissue>
    </source>
</reference>
<reference key="4">
    <citation type="journal article" date="2003" name="Nature">
        <title>The DNA sequence and analysis of human chromosome 14.</title>
        <authorList>
            <person name="Heilig R."/>
            <person name="Eckenberg R."/>
            <person name="Petit J.-L."/>
            <person name="Fonknechten N."/>
            <person name="Da Silva C."/>
            <person name="Cattolico L."/>
            <person name="Levy M."/>
            <person name="Barbe V."/>
            <person name="De Berardinis V."/>
            <person name="Ureta-Vidal A."/>
            <person name="Pelletier E."/>
            <person name="Vico V."/>
            <person name="Anthouard V."/>
            <person name="Rowen L."/>
            <person name="Madan A."/>
            <person name="Qin S."/>
            <person name="Sun H."/>
            <person name="Du H."/>
            <person name="Pepin K."/>
            <person name="Artiguenave F."/>
            <person name="Robert C."/>
            <person name="Cruaud C."/>
            <person name="Bruels T."/>
            <person name="Jaillon O."/>
            <person name="Friedlander L."/>
            <person name="Samson G."/>
            <person name="Brottier P."/>
            <person name="Cure S."/>
            <person name="Segurens B."/>
            <person name="Aniere F."/>
            <person name="Samain S."/>
            <person name="Crespeau H."/>
            <person name="Abbasi N."/>
            <person name="Aiach N."/>
            <person name="Boscus D."/>
            <person name="Dickhoff R."/>
            <person name="Dors M."/>
            <person name="Dubois I."/>
            <person name="Friedman C."/>
            <person name="Gouyvenoux M."/>
            <person name="James R."/>
            <person name="Madan A."/>
            <person name="Mairey-Estrada B."/>
            <person name="Mangenot S."/>
            <person name="Martins N."/>
            <person name="Menard M."/>
            <person name="Oztas S."/>
            <person name="Ratcliffe A."/>
            <person name="Shaffer T."/>
            <person name="Trask B."/>
            <person name="Vacherie B."/>
            <person name="Bellemere C."/>
            <person name="Belser C."/>
            <person name="Besnard-Gonnet M."/>
            <person name="Bartol-Mavel D."/>
            <person name="Boutard M."/>
            <person name="Briez-Silla S."/>
            <person name="Combette S."/>
            <person name="Dufosse-Laurent V."/>
            <person name="Ferron C."/>
            <person name="Lechaplais C."/>
            <person name="Louesse C."/>
            <person name="Muselet D."/>
            <person name="Magdelenat G."/>
            <person name="Pateau E."/>
            <person name="Petit E."/>
            <person name="Sirvain-Trukniewicz P."/>
            <person name="Trybou A."/>
            <person name="Vega-Czarny N."/>
            <person name="Bataille E."/>
            <person name="Bluet E."/>
            <person name="Bordelais I."/>
            <person name="Dubois M."/>
            <person name="Dumont C."/>
            <person name="Guerin T."/>
            <person name="Haffray S."/>
            <person name="Hammadi R."/>
            <person name="Muanga J."/>
            <person name="Pellouin V."/>
            <person name="Robert D."/>
            <person name="Wunderle E."/>
            <person name="Gauguet G."/>
            <person name="Roy A."/>
            <person name="Sainte-Marthe L."/>
            <person name="Verdier J."/>
            <person name="Verdier-Discala C."/>
            <person name="Hillier L.W."/>
            <person name="Fulton L."/>
            <person name="McPherson J."/>
            <person name="Matsuda F."/>
            <person name="Wilson R."/>
            <person name="Scarpelli C."/>
            <person name="Gyapay G."/>
            <person name="Wincker P."/>
            <person name="Saurin W."/>
            <person name="Quetier F."/>
            <person name="Waterston R."/>
            <person name="Hood L."/>
            <person name="Weissenbach J."/>
        </authorList>
    </citation>
    <scope>NUCLEOTIDE SEQUENCE [LARGE SCALE GENOMIC DNA]</scope>
</reference>
<reference key="5">
    <citation type="submission" date="2005-09" db="EMBL/GenBank/DDBJ databases">
        <authorList>
            <person name="Mural R.J."/>
            <person name="Istrail S."/>
            <person name="Sutton G."/>
            <person name="Florea L."/>
            <person name="Halpern A.L."/>
            <person name="Mobarry C.M."/>
            <person name="Lippert R."/>
            <person name="Walenz B."/>
            <person name="Shatkay H."/>
            <person name="Dew I."/>
            <person name="Miller J.R."/>
            <person name="Flanigan M.J."/>
            <person name="Edwards N.J."/>
            <person name="Bolanos R."/>
            <person name="Fasulo D."/>
            <person name="Halldorsson B.V."/>
            <person name="Hannenhalli S."/>
            <person name="Turner R."/>
            <person name="Yooseph S."/>
            <person name="Lu F."/>
            <person name="Nusskern D.R."/>
            <person name="Shue B.C."/>
            <person name="Zheng X.H."/>
            <person name="Zhong F."/>
            <person name="Delcher A.L."/>
            <person name="Huson D.H."/>
            <person name="Kravitz S.A."/>
            <person name="Mouchard L."/>
            <person name="Reinert K."/>
            <person name="Remington K.A."/>
            <person name="Clark A.G."/>
            <person name="Waterman M.S."/>
            <person name="Eichler E.E."/>
            <person name="Adams M.D."/>
            <person name="Hunkapiller M.W."/>
            <person name="Myers E.W."/>
            <person name="Venter J.C."/>
        </authorList>
    </citation>
    <scope>NUCLEOTIDE SEQUENCE [LARGE SCALE GENOMIC DNA]</scope>
</reference>
<reference key="6">
    <citation type="journal article" date="2004" name="Genome Res.">
        <title>The status, quality, and expansion of the NIH full-length cDNA project: the Mammalian Gene Collection (MGC).</title>
        <authorList>
            <consortium name="The MGC Project Team"/>
        </authorList>
    </citation>
    <scope>NUCLEOTIDE SEQUENCE [LARGE SCALE MRNA] (ISOFORM 1)</scope>
    <source>
        <tissue>Ovary</tissue>
        <tissue>Placenta</tissue>
    </source>
</reference>
<reference key="7">
    <citation type="journal article" date="2003" name="DNA Res.">
        <title>Characterization of long cDNA clones from human adult spleen. II. The complete sequences of 81 cDNA clones.</title>
        <authorList>
            <person name="Jikuya H."/>
            <person name="Takano J."/>
            <person name="Kikuno R."/>
            <person name="Hirosawa M."/>
            <person name="Nagase T."/>
            <person name="Nomura N."/>
            <person name="Ohara O."/>
        </authorList>
    </citation>
    <scope>NUCLEOTIDE SEQUENCE [LARGE SCALE MRNA] OF 526-1072 (ISOFORMS 1/3)</scope>
    <source>
        <tissue>Spleen</tissue>
    </source>
</reference>
<reference key="8">
    <citation type="journal article" date="2008" name="J. Proteome Res.">
        <title>Combining protein-based IMAC, peptide-based IMAC, and MudPIT for efficient phosphoproteomic analysis.</title>
        <authorList>
            <person name="Cantin G.T."/>
            <person name="Yi W."/>
            <person name="Lu B."/>
            <person name="Park S.K."/>
            <person name="Xu T."/>
            <person name="Lee J.-D."/>
            <person name="Yates J.R. III"/>
        </authorList>
    </citation>
    <scope>PHOSPHORYLATION [LARGE SCALE ANALYSIS] AT SER-466</scope>
    <scope>IDENTIFICATION BY MASS SPECTROMETRY [LARGE SCALE ANALYSIS]</scope>
    <source>
        <tissue>Cervix carcinoma</tissue>
    </source>
</reference>
<reference key="9">
    <citation type="journal article" date="2008" name="Proc. Natl. Acad. Sci. U.S.A.">
        <title>A quantitative atlas of mitotic phosphorylation.</title>
        <authorList>
            <person name="Dephoure N."/>
            <person name="Zhou C."/>
            <person name="Villen J."/>
            <person name="Beausoleil S.A."/>
            <person name="Bakalarski C.E."/>
            <person name="Elledge S.J."/>
            <person name="Gygi S.P."/>
        </authorList>
    </citation>
    <scope>PHOSPHORYLATION [LARGE SCALE ANALYSIS] AT SER-466</scope>
    <scope>IDENTIFICATION BY MASS SPECTROMETRY [LARGE SCALE ANALYSIS]</scope>
    <source>
        <tissue>Cervix carcinoma</tissue>
    </source>
</reference>
<reference key="10">
    <citation type="journal article" date="2009" name="Mol. Cell">
        <title>Recruitment of the linear ubiquitin chain assembly complex stabilizes the TNF-R1 signaling complex and is required for TNF-mediated gene induction.</title>
        <authorList>
            <person name="Haas T.L."/>
            <person name="Emmerich C.H."/>
            <person name="Gerlach B."/>
            <person name="Schmukle A.C."/>
            <person name="Cordier S.M."/>
            <person name="Rieser E."/>
            <person name="Feltham R."/>
            <person name="Vince J."/>
            <person name="Warnken U."/>
            <person name="Wenger T."/>
            <person name="Koschny R."/>
            <person name="Komander D."/>
            <person name="Silke J."/>
            <person name="Walczak H."/>
        </authorList>
    </citation>
    <scope>POLYUBIQUITIN-BINDING</scope>
    <scope>FUNCTION OF THE LUBAC COMPLEX</scope>
    <scope>CATALYTIC ACTIVITY</scope>
    <scope>PATHWAY</scope>
    <scope>ASSOCIATION WITH TNF-RSC</scope>
    <scope>IDENTIFICATION BY MASS SPECTROMETRY</scope>
</reference>
<reference key="11">
    <citation type="journal article" date="2009" name="Nat. Cell Biol.">
        <title>Involvement of linear polyubiquitylation of NEMO in NF-kappaB activation.</title>
        <authorList>
            <person name="Tokunaga F."/>
            <person name="Sakata S."/>
            <person name="Saeki Y."/>
            <person name="Satomi Y."/>
            <person name="Kirisako T."/>
            <person name="Kamei K."/>
            <person name="Nakagawa T."/>
            <person name="Kato M."/>
            <person name="Murata S."/>
            <person name="Yamaoka S."/>
            <person name="Yamamoto M."/>
            <person name="Akira S."/>
            <person name="Takao T."/>
            <person name="Tanaka K."/>
            <person name="Iwai K."/>
        </authorList>
    </citation>
    <scope>FUNCTION OF THE LUBAC COMPLEX</scope>
    <scope>CATALYTIC ACTIVITY</scope>
    <scope>PATHWAY</scope>
</reference>
<reference key="12">
    <citation type="journal article" date="2011" name="Nature">
        <title>Linear ubiquitination prevents inflammation and regulates immune signalling.</title>
        <authorList>
            <person name="Gerlach B."/>
            <person name="Cordier S.M."/>
            <person name="Schmukle A.C."/>
            <person name="Emmerich C.H."/>
            <person name="Rieser E."/>
            <person name="Haas T.L."/>
            <person name="Webb A.I."/>
            <person name="Rickard J.A."/>
            <person name="Anderton H."/>
            <person name="Wong W.W."/>
            <person name="Nachbur U."/>
            <person name="Gangoda L."/>
            <person name="Warnken U."/>
            <person name="Purcell A.W."/>
            <person name="Silke J."/>
            <person name="Walczak H."/>
        </authorList>
    </citation>
    <scope>IDENTIFICATION IN THE LUBAC COMPLEX</scope>
    <scope>FUNCTION</scope>
</reference>
<reference key="13">
    <citation type="journal article" date="2011" name="Nature">
        <title>SHARPIN is a component of the NF-kappaB-activating linear ubiquitin chain assembly complex.</title>
        <authorList>
            <person name="Tokunaga F."/>
            <person name="Nakagawa T."/>
            <person name="Nakahara M."/>
            <person name="Saeki Y."/>
            <person name="Taniguchi M."/>
            <person name="Sakata S."/>
            <person name="Tanaka K."/>
            <person name="Nakano H."/>
            <person name="Iwai K."/>
        </authorList>
    </citation>
    <scope>IDENTIFICATION IN THE LUBAC COMPLEX</scope>
    <scope>FUNCTION</scope>
</reference>
<reference key="14">
    <citation type="journal article" date="2011" name="Nature">
        <title>SHARPIN forms a linear ubiquitin ligase complex regulating NF-kappaB activity and apoptosis.</title>
        <authorList>
            <person name="Ikeda F."/>
            <person name="Deribe Y.L."/>
            <person name="Skanland S.S."/>
            <person name="Stieglitz B."/>
            <person name="Grabbe C."/>
            <person name="Franz-Wachtel M."/>
            <person name="van Wijk S.J."/>
            <person name="Goswami P."/>
            <person name="Nagy V."/>
            <person name="Terzic J."/>
            <person name="Tokunaga F."/>
            <person name="Androulidaki A."/>
            <person name="Nakagawa T."/>
            <person name="Pasparakis M."/>
            <person name="Iwai K."/>
            <person name="Sundberg J.P."/>
            <person name="Schaefer L."/>
            <person name="Rittinger K."/>
            <person name="Macek B."/>
            <person name="Dikic I."/>
        </authorList>
    </citation>
    <scope>IDENTIFICATION IN THE LUBAC COMPLEX</scope>
    <scope>FUNCTION</scope>
    <scope>DOMAIN RANBP2-TYPE</scope>
    <scope>UBIQUITIN-BINDING</scope>
    <scope>MUTAGENESIS OF CYS-699; CYS-702; CYS-871 AND CYS-874</scope>
</reference>
<reference key="15">
    <citation type="journal article" date="2012" name="EMBO J.">
        <title>The E3 ligase HOIP specifies linear ubiquitin chain assembly through its RING-IBR-RING domain and the unique LDD extension.</title>
        <authorList>
            <person name="Smit J.J."/>
            <person name="Monteferrario D."/>
            <person name="Noordermeer S.M."/>
            <person name="van Dijk W.J."/>
            <person name="van der Reijden B.A."/>
            <person name="Sixma T.K."/>
        </authorList>
    </citation>
    <scope>FUNCTION</scope>
    <scope>DOMAIN RING</scope>
    <scope>DOMAIN LDD</scope>
    <scope>ENZYME MECHANISM</scope>
</reference>
<reference key="16">
    <citation type="journal article" date="2012" name="EMBO Rep.">
        <title>A non-canonical UBA-UBL interaction forms the linear-ubiquitin-chain assembly complex.</title>
        <authorList>
            <person name="Yagi H."/>
            <person name="Ishimoto K."/>
            <person name="Hiromoto T."/>
            <person name="Fujita H."/>
            <person name="Mizushima T."/>
            <person name="Uekusa Y."/>
            <person name="Yagi-Utsumi M."/>
            <person name="Kurimoto E."/>
            <person name="Noda M."/>
            <person name="Uchiyama S."/>
            <person name="Tokunaga F."/>
            <person name="Iwai K."/>
            <person name="Kato K."/>
        </authorList>
    </citation>
    <scope>INTERACTION WITH RBCK1/HOIL1</scope>
</reference>
<reference key="17">
    <citation type="journal article" date="2013" name="J. Proteome Res.">
        <title>Toward a comprehensive characterization of a human cancer cell phosphoproteome.</title>
        <authorList>
            <person name="Zhou H."/>
            <person name="Di Palma S."/>
            <person name="Preisinger C."/>
            <person name="Peng M."/>
            <person name="Polat A.N."/>
            <person name="Heck A.J."/>
            <person name="Mohammed S."/>
        </authorList>
    </citation>
    <scope>PHOSPHORYLATION [LARGE SCALE ANALYSIS] AT SER-383 AND SER-466</scope>
    <scope>IDENTIFICATION BY MASS SPECTROMETRY [LARGE SCALE ANALYSIS]</scope>
    <source>
        <tissue>Cervix carcinoma</tissue>
        <tissue>Erythroleukemia</tissue>
    </source>
</reference>
<reference key="18">
    <citation type="journal article" date="2013" name="Nature">
        <title>The linear ubiquitin-specific deubiquitinase gumby regulates angiogenesis.</title>
        <authorList>
            <person name="Rivkin E."/>
            <person name="Almeida S.M."/>
            <person name="Ceccarelli D.F."/>
            <person name="Juang Y.C."/>
            <person name="Maclean T.A."/>
            <person name="Srikumar T."/>
            <person name="Huang H."/>
            <person name="Dunham W.H."/>
            <person name="Fukumura R."/>
            <person name="Xie G."/>
            <person name="Gondo Y."/>
            <person name="Raught B."/>
            <person name="Gingras A.C."/>
            <person name="Sicheri F."/>
            <person name="Cordes S.P."/>
        </authorList>
    </citation>
    <scope>FUNCTION</scope>
    <scope>INTERACTION WITH OTULIN</scope>
</reference>
<reference key="19">
    <citation type="journal article" date="2014" name="J. Proteomics">
        <title>An enzyme assisted RP-RPLC approach for in-depth analysis of human liver phosphoproteome.</title>
        <authorList>
            <person name="Bian Y."/>
            <person name="Song C."/>
            <person name="Cheng K."/>
            <person name="Dong M."/>
            <person name="Wang F."/>
            <person name="Huang J."/>
            <person name="Sun D."/>
            <person name="Wang L."/>
            <person name="Ye M."/>
            <person name="Zou H."/>
        </authorList>
    </citation>
    <scope>PHOSPHORYLATION [LARGE SCALE ANALYSIS] AT SER-383 AND SER-466</scope>
    <scope>IDENTIFICATION BY MASS SPECTROMETRY [LARGE SCALE ANALYSIS]</scope>
    <source>
        <tissue>Liver</tissue>
    </source>
</reference>
<reference key="20">
    <citation type="journal article" date="2016" name="EMBO Rep.">
        <title>SPATA2 promotes CYLD activity and regulates TNF-induced NF-kappaB signaling and cell death.</title>
        <authorList>
            <person name="Schlicher L."/>
            <person name="Wissler M."/>
            <person name="Preiss F."/>
            <person name="Brauns-Schubert P."/>
            <person name="Jakob C."/>
            <person name="Dumit V."/>
            <person name="Borner C."/>
            <person name="Dengjel J."/>
            <person name="Maurer U."/>
        </authorList>
    </citation>
    <scope>FUNCTION</scope>
    <scope>INTERACTION WITH SPATA2</scope>
    <scope>MUTAGENESIS OF ASN-102</scope>
</reference>
<reference key="21">
    <citation type="journal article" date="2016" name="Cell Rep.">
        <title>SPATA2-Mediated Binding of CYLD to HOIP Enables CYLD Recruitment to Signaling Complexes.</title>
        <authorList>
            <person name="Kupka S."/>
            <person name="De Miguel D."/>
            <person name="Draber P."/>
            <person name="Martino L."/>
            <person name="Surinova S."/>
            <person name="Rittinger K."/>
            <person name="Walczak H."/>
        </authorList>
    </citation>
    <scope>INTERACTION WITH SPATA2</scope>
</reference>
<reference key="22">
    <citation type="journal article" date="2016" name="Cell Rep.">
        <title>CYLD limits Lys63- and Met1-linked ubiquitin at receptor complexes to regulate innate immune signaling.</title>
        <authorList>
            <person name="Hrdinka M."/>
            <person name="Fiil B.K."/>
            <person name="Zucca M."/>
            <person name="Leske D."/>
            <person name="Bagola K."/>
            <person name="Yabal M."/>
            <person name="Elliott P.R."/>
            <person name="Damgaard R.B."/>
            <person name="Komander D."/>
            <person name="Jost P.J."/>
            <person name="Gyrd-Hansen M."/>
        </authorList>
    </citation>
    <scope>INTERACTION WITH CYLD</scope>
</reference>
<reference key="23">
    <citation type="journal article" date="2016" name="J. Biol. Chem.">
        <title>Molecular determinants of scaffold-induced linear ubiquitinylation of B Cell Lymphoma/Leukemia 10 (Bcl10) during T cell receptor and oncogenic caspase recruitment domain-containing protein 11 (CARD11) signaling.</title>
        <authorList>
            <person name="Yang Y.K."/>
            <person name="Yang C."/>
            <person name="Chan W."/>
            <person name="Wang Z."/>
            <person name="Deibel K.E."/>
            <person name="Pomerantz J.L."/>
        </authorList>
    </citation>
    <scope>FUNCTION</scope>
    <scope>INTERACTION WITH CARD11</scope>
</reference>
<reference key="24">
    <citation type="journal article" date="2016" name="Nat. Microbiol.">
        <title>Shigella flexneri suppresses NF-kappaB activation by inhibiting linear ubiquitin chain ligation.</title>
        <authorList>
            <person name="de Jong M.F."/>
            <person name="Liu Z."/>
            <person name="Chen D."/>
            <person name="Alto N.M."/>
        </authorList>
    </citation>
    <scope>INTERACTION WITH S.FLEXNERI IPAH1.4 AND IPAH2.5 (MICROBIAL INFECTION)</scope>
    <scope>UBIQUITINATION AT LYS-735; LYS-783 AND LYS-875 (MICROBIAL INFECTION)</scope>
    <scope>MUTAGENESIS OF LYS-735; LYS-783 AND LYS-875</scope>
</reference>
<reference key="25">
    <citation type="journal article" date="2017" name="Nat. Microbiol.">
        <title>LUBAC-synthesized linear ubiquitin chains restrict cytosol-invading bacteria by activating autophagy and NF-kappaB.</title>
        <authorList>
            <person name="Noad J."/>
            <person name="von der Malsburg A."/>
            <person name="Pathe C."/>
            <person name="Michel M.A."/>
            <person name="Komander D."/>
            <person name="Randow F."/>
        </authorList>
    </citation>
    <scope>FUNCTION</scope>
    <scope>CATALYTIC ACTIVITY</scope>
    <scope>IDENTIFICATION IN THE LUBAC COMPLEX</scope>
    <scope>PATHWAY</scope>
    <scope>UBIQUITINATION (MICROBIAL INFECTION)</scope>
    <scope>MUTAGENESIS OF THR-360; CYS-885; ARG-935 AND ASP-983</scope>
</reference>
<reference key="26">
    <citation type="journal article" date="2017" name="Biochem. Biophys. Res. Commun.">
        <title>Decreased linear ubiquitination of NEMO and FADD on apoptosis with caspase-mediated cleavage of HOIP.</title>
        <authorList>
            <person name="Goto E."/>
            <person name="Tokunaga F."/>
        </authorList>
    </citation>
    <scope>FUNCTION</scope>
    <scope>INTERACTION WITH SPATA2</scope>
    <scope>PROTEOLYTIC CLEAVAGE</scope>
    <scope>MUTAGENESIS OF ASP-390</scope>
</reference>
<reference key="27">
    <citation type="journal article" date="2021" name="Nature">
        <title>Ubiquitylation of lipopolysaccharide by RNF213 during bacterial infection.</title>
        <authorList>
            <person name="Otten E.G."/>
            <person name="Werner E."/>
            <person name="Crespillo-Casado A."/>
            <person name="Boyle K.B."/>
            <person name="Dharamdasani V."/>
            <person name="Pathe C."/>
            <person name="Santhanam B."/>
            <person name="Randow F."/>
        </authorList>
    </citation>
    <scope>FUNCTION</scope>
</reference>
<reference key="28">
    <citation type="submission" date="2005-11" db="PDB data bank">
        <title>Solution structure of the IBR domain of the RING finger protein 31.</title>
        <authorList>
            <consortium name="RIKEN structural genomics initiative (RSGI)"/>
        </authorList>
    </citation>
    <scope>STRUCTURE BY NMR OF 779-851</scope>
</reference>
<reference key="29">
    <citation type="journal article" date="2014" name="Mol. Cell">
        <title>Molecular basis and regulation of OTULIN-LUBAC interaction.</title>
        <authorList>
            <person name="Elliott P.R."/>
            <person name="Nielsen S.V."/>
            <person name="Marco-Casanova P."/>
            <person name="Fiil B.K."/>
            <person name="Keusekotten K."/>
            <person name="Mailand N."/>
            <person name="Freund S.M."/>
            <person name="Gyrd-Hansen M."/>
            <person name="Komander D."/>
        </authorList>
    </citation>
    <scope>X-RAY CRYSTALLOGRAPHY (2.0 ANGSTROMS) OF 1-184 IN COMPLEX WITH OTULIN</scope>
    <scope>UBIQUITINATION</scope>
    <scope>DOMAIN</scope>
    <scope>INTERACTION WITH OTULIN</scope>
    <scope>IDENTIFICATION IN THE LUBAC COMPLEX</scope>
    <scope>MUTAGENESIS OF TYR-82; ASN-85; LYS-99; ASN-101; ASN-102 AND VAL-104</scope>
</reference>
<reference key="30">
    <citation type="journal article" date="2014" name="Mol. Cell">
        <title>Binding of OTULIN to the PUB domain of HOIP controls NF-kappaB signaling.</title>
        <authorList>
            <person name="Schaeffer V."/>
            <person name="Akutsu M."/>
            <person name="Olma M.H."/>
            <person name="Gomes L.C."/>
            <person name="Kawasaki M."/>
            <person name="Dikic I."/>
        </authorList>
    </citation>
    <scope>X-RAY CRYSTALLOGRAPHY (2.7 ANGSTROMS) OF 1-179 IN COMPLEX WITH OTULIN</scope>
    <scope>X-RAY CRYSTALLOGRAPHY (2.3 ANGSTROMS) OF 1-179 IN COMPLEX WITH VCP</scope>
</reference>
<reference evidence="37" key="31">
    <citation type="journal article" date="2016" name="Mol. Cell">
        <title>SPATA2 links CYLD to LUBAC, activates CYLD, and controls LUBAC signaling.</title>
        <authorList>
            <person name="Elliott P.R."/>
            <person name="Leske D."/>
            <person name="Hrdinka M."/>
            <person name="Bagola K."/>
            <person name="Fiil B.K."/>
            <person name="McLaughlin S.H."/>
            <person name="Wagstaff J."/>
            <person name="Volkmar N."/>
            <person name="Christianson J.C."/>
            <person name="Kessler B.M."/>
            <person name="Freund S.M."/>
            <person name="Komander D."/>
            <person name="Gyrd-Hansen M."/>
        </authorList>
    </citation>
    <scope>X-RAY CRYSTALLOGRAPHY (2.70 ANGSTROMS) OF 5-176 IN COMPLEX WITH SPATA2</scope>
    <scope>INTERACTION WITH SPATA2</scope>
</reference>
<reference evidence="38 39" key="32">
    <citation type="journal article" date="2022" name="Proc. Natl. Acad. Sci. U.S.A.">
        <title>Mechanistic insights into the subversion of the linear ubiquitin chain assembly complex by the E3 ligase IpaH1.4 of Shigella flexneri.</title>
        <authorList>
            <person name="Liu J."/>
            <person name="Wang Y."/>
            <person name="Wang D."/>
            <person name="Wang Y."/>
            <person name="Xu X."/>
            <person name="Zhang Y."/>
            <person name="Li Y."/>
            <person name="Zhang M."/>
            <person name="Gong X."/>
            <person name="Tang Y."/>
            <person name="Shen L."/>
            <person name="Li M."/>
            <person name="Pan L."/>
        </authorList>
    </citation>
    <scope>X-RAY CRYSTALLOGRAPHY (1.66 ANGSTROMS) OF 697-793 IN COMPLEX WITH S.FLEXNERI IPAH1.4; UBE2L3 AND ZINC</scope>
    <scope>UBIQUITINATION (MICROBIAL INFECTION)</scope>
</reference>
<reference key="33">
    <citation type="journal article" date="2015" name="J. Exp. Med.">
        <title>Human HOIP and LUBAC deficiency underlies autoinflammation, immunodeficiency, amylopectinosis, and lymphangiectasia.</title>
        <authorList>
            <person name="Boisson B."/>
            <person name="Laplantine E."/>
            <person name="Dobbs K."/>
            <person name="Cobat A."/>
            <person name="Tarantino N."/>
            <person name="Hazen M."/>
            <person name="Lidov H.G."/>
            <person name="Hopkins G."/>
            <person name="Du L."/>
            <person name="Belkadi A."/>
            <person name="Chrabieh M."/>
            <person name="Itan Y."/>
            <person name="Picard C."/>
            <person name="Fournet J.C."/>
            <person name="Eibel H."/>
            <person name="Tsitsikov E."/>
            <person name="Pai S.Y."/>
            <person name="Abel L."/>
            <person name="Al-Herz W."/>
            <person name="Casanova J.L."/>
            <person name="Israel A."/>
            <person name="Notarangelo L.D."/>
        </authorList>
    </citation>
    <scope>INVOLVEMENT IN IMD115</scope>
    <scope>VARIANT IMD115 PRO-72</scope>
    <scope>CHARACTERIZATION OF VARIANT IMD115 PRO-72</scope>
</reference>
<reference key="34">
    <citation type="journal article" date="2019" name="Front. Immunol.">
        <title>Second Case of HOIP Deficiency Expands Clinical Features and Defines Inflammatory Transcriptome Regulated by LUBAC.</title>
        <authorList>
            <person name="Oda H."/>
            <person name="Beck D.B."/>
            <person name="Kuehn H.S."/>
            <person name="Sampaio Moura N."/>
            <person name="Hoffmann P."/>
            <person name="Ibarra M."/>
            <person name="Stoddard J."/>
            <person name="Tsai W.L."/>
            <person name="Gutierrez-Cruz G."/>
            <person name="Gadina M."/>
            <person name="Rosenzweig S.D."/>
            <person name="Kastner D.L."/>
            <person name="Notarangelo L.D."/>
            <person name="Aksentijevich I."/>
        </authorList>
    </citation>
    <scope>INVOLVEMENT IN IMD115</scope>
    <scope>VARIANT IMD115 HIS-399</scope>
    <scope>CHARACTERIZATION OF VARIANT IMD115 HIS-399</scope>
    <scope>INTERACTION WITH RBCK1 AND SHARPIN</scope>
</reference>